<dbReference type="EC" id="7.6.2.2" evidence="25"/>
<dbReference type="EC" id="7.6.2.3" evidence="1"/>
<dbReference type="EMBL" id="L05628">
    <property type="protein sequence ID" value="AAB46616.1"/>
    <property type="molecule type" value="mRNA"/>
</dbReference>
<dbReference type="EMBL" id="AF022853">
    <property type="protein sequence ID" value="AAB83979.1"/>
    <property type="molecule type" value="Genomic_DNA"/>
</dbReference>
<dbReference type="EMBL" id="AF022827">
    <property type="protein sequence ID" value="AAB83979.1"/>
    <property type="status" value="JOINED"/>
    <property type="molecule type" value="Genomic_DNA"/>
</dbReference>
<dbReference type="EMBL" id="AF022828">
    <property type="protein sequence ID" value="AAB83979.1"/>
    <property type="status" value="JOINED"/>
    <property type="molecule type" value="Genomic_DNA"/>
</dbReference>
<dbReference type="EMBL" id="AF022829">
    <property type="protein sequence ID" value="AAB83979.1"/>
    <property type="status" value="JOINED"/>
    <property type="molecule type" value="Genomic_DNA"/>
</dbReference>
<dbReference type="EMBL" id="AF022831">
    <property type="protein sequence ID" value="AAB83979.1"/>
    <property type="status" value="JOINED"/>
    <property type="molecule type" value="Genomic_DNA"/>
</dbReference>
<dbReference type="EMBL" id="AF022833">
    <property type="protein sequence ID" value="AAB83979.1"/>
    <property type="status" value="JOINED"/>
    <property type="molecule type" value="Genomic_DNA"/>
</dbReference>
<dbReference type="EMBL" id="AF022835">
    <property type="protein sequence ID" value="AAB83979.1"/>
    <property type="status" value="JOINED"/>
    <property type="molecule type" value="Genomic_DNA"/>
</dbReference>
<dbReference type="EMBL" id="AF022837">
    <property type="protein sequence ID" value="AAB83979.1"/>
    <property type="status" value="JOINED"/>
    <property type="molecule type" value="Genomic_DNA"/>
</dbReference>
<dbReference type="EMBL" id="AF022839">
    <property type="protein sequence ID" value="AAB83979.1"/>
    <property type="status" value="JOINED"/>
    <property type="molecule type" value="Genomic_DNA"/>
</dbReference>
<dbReference type="EMBL" id="AF022841">
    <property type="protein sequence ID" value="AAB83979.1"/>
    <property type="status" value="JOINED"/>
    <property type="molecule type" value="Genomic_DNA"/>
</dbReference>
<dbReference type="EMBL" id="AF022850">
    <property type="protein sequence ID" value="AAB83979.1"/>
    <property type="status" value="JOINED"/>
    <property type="molecule type" value="Genomic_DNA"/>
</dbReference>
<dbReference type="EMBL" id="AF022849">
    <property type="protein sequence ID" value="AAB83979.1"/>
    <property type="status" value="JOINED"/>
    <property type="molecule type" value="Genomic_DNA"/>
</dbReference>
<dbReference type="EMBL" id="AF022848">
    <property type="protein sequence ID" value="AAB83979.1"/>
    <property type="status" value="JOINED"/>
    <property type="molecule type" value="Genomic_DNA"/>
</dbReference>
<dbReference type="EMBL" id="AF022847">
    <property type="protein sequence ID" value="AAB83979.1"/>
    <property type="status" value="JOINED"/>
    <property type="molecule type" value="Genomic_DNA"/>
</dbReference>
<dbReference type="EMBL" id="AF022846">
    <property type="protein sequence ID" value="AAB83979.1"/>
    <property type="status" value="JOINED"/>
    <property type="molecule type" value="Genomic_DNA"/>
</dbReference>
<dbReference type="EMBL" id="AF022845">
    <property type="protein sequence ID" value="AAB83979.1"/>
    <property type="status" value="JOINED"/>
    <property type="molecule type" value="Genomic_DNA"/>
</dbReference>
<dbReference type="EMBL" id="AF022844">
    <property type="protein sequence ID" value="AAB83979.1"/>
    <property type="status" value="JOINED"/>
    <property type="molecule type" value="Genomic_DNA"/>
</dbReference>
<dbReference type="EMBL" id="AF022843">
    <property type="protein sequence ID" value="AAB83979.1"/>
    <property type="status" value="JOINED"/>
    <property type="molecule type" value="Genomic_DNA"/>
</dbReference>
<dbReference type="EMBL" id="AF022842">
    <property type="protein sequence ID" value="AAB83979.1"/>
    <property type="status" value="JOINED"/>
    <property type="molecule type" value="Genomic_DNA"/>
</dbReference>
<dbReference type="EMBL" id="AF022852">
    <property type="protein sequence ID" value="AAB83979.1"/>
    <property type="status" value="JOINED"/>
    <property type="molecule type" value="Genomic_DNA"/>
</dbReference>
<dbReference type="EMBL" id="AF022851">
    <property type="protein sequence ID" value="AAB83979.1"/>
    <property type="status" value="JOINED"/>
    <property type="molecule type" value="Genomic_DNA"/>
</dbReference>
<dbReference type="EMBL" id="AF022840">
    <property type="protein sequence ID" value="AAB83979.1"/>
    <property type="status" value="JOINED"/>
    <property type="molecule type" value="Genomic_DNA"/>
</dbReference>
<dbReference type="EMBL" id="AF022838">
    <property type="protein sequence ID" value="AAB83979.1"/>
    <property type="status" value="JOINED"/>
    <property type="molecule type" value="Genomic_DNA"/>
</dbReference>
<dbReference type="EMBL" id="AF022836">
    <property type="protein sequence ID" value="AAB83979.1"/>
    <property type="status" value="JOINED"/>
    <property type="molecule type" value="Genomic_DNA"/>
</dbReference>
<dbReference type="EMBL" id="AF022834">
    <property type="protein sequence ID" value="AAB83979.1"/>
    <property type="status" value="JOINED"/>
    <property type="molecule type" value="Genomic_DNA"/>
</dbReference>
<dbReference type="EMBL" id="AF022832">
    <property type="protein sequence ID" value="AAB83979.1"/>
    <property type="status" value="JOINED"/>
    <property type="molecule type" value="Genomic_DNA"/>
</dbReference>
<dbReference type="EMBL" id="AF022826">
    <property type="protein sequence ID" value="AAB83979.1"/>
    <property type="status" value="JOINED"/>
    <property type="molecule type" value="Genomic_DNA"/>
</dbReference>
<dbReference type="EMBL" id="AF022825">
    <property type="protein sequence ID" value="AAB83979.1"/>
    <property type="status" value="JOINED"/>
    <property type="molecule type" value="Genomic_DNA"/>
</dbReference>
<dbReference type="EMBL" id="AF022824">
    <property type="protein sequence ID" value="AAB83979.1"/>
    <property type="status" value="JOINED"/>
    <property type="molecule type" value="Genomic_DNA"/>
</dbReference>
<dbReference type="EMBL" id="AF022830">
    <property type="protein sequence ID" value="AAB83979.1"/>
    <property type="status" value="JOINED"/>
    <property type="molecule type" value="Genomic_DNA"/>
</dbReference>
<dbReference type="EMBL" id="AF022853">
    <property type="protein sequence ID" value="AAB83980.1"/>
    <property type="molecule type" value="Genomic_DNA"/>
</dbReference>
<dbReference type="EMBL" id="AF022824">
    <property type="protein sequence ID" value="AAB83980.1"/>
    <property type="status" value="JOINED"/>
    <property type="molecule type" value="Genomic_DNA"/>
</dbReference>
<dbReference type="EMBL" id="AF022825">
    <property type="protein sequence ID" value="AAB83980.1"/>
    <property type="status" value="JOINED"/>
    <property type="molecule type" value="Genomic_DNA"/>
</dbReference>
<dbReference type="EMBL" id="AF022826">
    <property type="protein sequence ID" value="AAB83980.1"/>
    <property type="status" value="JOINED"/>
    <property type="molecule type" value="Genomic_DNA"/>
</dbReference>
<dbReference type="EMBL" id="AF022828">
    <property type="protein sequence ID" value="AAB83980.1"/>
    <property type="status" value="JOINED"/>
    <property type="molecule type" value="Genomic_DNA"/>
</dbReference>
<dbReference type="EMBL" id="AF022830">
    <property type="protein sequence ID" value="AAB83980.1"/>
    <property type="status" value="JOINED"/>
    <property type="molecule type" value="Genomic_DNA"/>
</dbReference>
<dbReference type="EMBL" id="AF022832">
    <property type="protein sequence ID" value="AAB83980.1"/>
    <property type="status" value="JOINED"/>
    <property type="molecule type" value="Genomic_DNA"/>
</dbReference>
<dbReference type="EMBL" id="AF022834">
    <property type="protein sequence ID" value="AAB83980.1"/>
    <property type="status" value="JOINED"/>
    <property type="molecule type" value="Genomic_DNA"/>
</dbReference>
<dbReference type="EMBL" id="AF022836">
    <property type="protein sequence ID" value="AAB83980.1"/>
    <property type="status" value="JOINED"/>
    <property type="molecule type" value="Genomic_DNA"/>
</dbReference>
<dbReference type="EMBL" id="AF022838">
    <property type="protein sequence ID" value="AAB83980.1"/>
    <property type="status" value="JOINED"/>
    <property type="molecule type" value="Genomic_DNA"/>
</dbReference>
<dbReference type="EMBL" id="AF022848">
    <property type="protein sequence ID" value="AAB83980.1"/>
    <property type="status" value="JOINED"/>
    <property type="molecule type" value="Genomic_DNA"/>
</dbReference>
<dbReference type="EMBL" id="AF022847">
    <property type="protein sequence ID" value="AAB83980.1"/>
    <property type="status" value="JOINED"/>
    <property type="molecule type" value="Genomic_DNA"/>
</dbReference>
<dbReference type="EMBL" id="AF022846">
    <property type="protein sequence ID" value="AAB83980.1"/>
    <property type="status" value="JOINED"/>
    <property type="molecule type" value="Genomic_DNA"/>
</dbReference>
<dbReference type="EMBL" id="AF022845">
    <property type="protein sequence ID" value="AAB83980.1"/>
    <property type="status" value="JOINED"/>
    <property type="molecule type" value="Genomic_DNA"/>
</dbReference>
<dbReference type="EMBL" id="AF022844">
    <property type="protein sequence ID" value="AAB83980.1"/>
    <property type="status" value="JOINED"/>
    <property type="molecule type" value="Genomic_DNA"/>
</dbReference>
<dbReference type="EMBL" id="AF022843">
    <property type="protein sequence ID" value="AAB83980.1"/>
    <property type="status" value="JOINED"/>
    <property type="molecule type" value="Genomic_DNA"/>
</dbReference>
<dbReference type="EMBL" id="AF022842">
    <property type="protein sequence ID" value="AAB83980.1"/>
    <property type="status" value="JOINED"/>
    <property type="molecule type" value="Genomic_DNA"/>
</dbReference>
<dbReference type="EMBL" id="AF022841">
    <property type="protein sequence ID" value="AAB83980.1"/>
    <property type="status" value="JOINED"/>
    <property type="molecule type" value="Genomic_DNA"/>
</dbReference>
<dbReference type="EMBL" id="AF022839">
    <property type="protein sequence ID" value="AAB83980.1"/>
    <property type="status" value="JOINED"/>
    <property type="molecule type" value="Genomic_DNA"/>
</dbReference>
<dbReference type="EMBL" id="AF022852">
    <property type="protein sequence ID" value="AAB83980.1"/>
    <property type="status" value="JOINED"/>
    <property type="molecule type" value="Genomic_DNA"/>
</dbReference>
<dbReference type="EMBL" id="AF022851">
    <property type="protein sequence ID" value="AAB83980.1"/>
    <property type="status" value="JOINED"/>
    <property type="molecule type" value="Genomic_DNA"/>
</dbReference>
<dbReference type="EMBL" id="AF022850">
    <property type="protein sequence ID" value="AAB83980.1"/>
    <property type="status" value="JOINED"/>
    <property type="molecule type" value="Genomic_DNA"/>
</dbReference>
<dbReference type="EMBL" id="AF022849">
    <property type="protein sequence ID" value="AAB83980.1"/>
    <property type="status" value="JOINED"/>
    <property type="molecule type" value="Genomic_DNA"/>
</dbReference>
<dbReference type="EMBL" id="AF022837">
    <property type="protein sequence ID" value="AAB83980.1"/>
    <property type="status" value="JOINED"/>
    <property type="molecule type" value="Genomic_DNA"/>
</dbReference>
<dbReference type="EMBL" id="AF022835">
    <property type="protein sequence ID" value="AAB83980.1"/>
    <property type="status" value="JOINED"/>
    <property type="molecule type" value="Genomic_DNA"/>
</dbReference>
<dbReference type="EMBL" id="AF022833">
    <property type="protein sequence ID" value="AAB83980.1"/>
    <property type="status" value="JOINED"/>
    <property type="molecule type" value="Genomic_DNA"/>
</dbReference>
<dbReference type="EMBL" id="AF022831">
    <property type="protein sequence ID" value="AAB83980.1"/>
    <property type="status" value="JOINED"/>
    <property type="molecule type" value="Genomic_DNA"/>
</dbReference>
<dbReference type="EMBL" id="AF022829">
    <property type="protein sequence ID" value="AAB83980.1"/>
    <property type="status" value="JOINED"/>
    <property type="molecule type" value="Genomic_DNA"/>
</dbReference>
<dbReference type="EMBL" id="AF022827">
    <property type="protein sequence ID" value="AAB83980.1"/>
    <property type="status" value="JOINED"/>
    <property type="molecule type" value="Genomic_DNA"/>
</dbReference>
<dbReference type="EMBL" id="AF022853">
    <property type="protein sequence ID" value="AAB83981.1"/>
    <property type="molecule type" value="Genomic_DNA"/>
</dbReference>
<dbReference type="EMBL" id="AF022824">
    <property type="protein sequence ID" value="AAB83981.1"/>
    <property type="status" value="JOINED"/>
    <property type="molecule type" value="Genomic_DNA"/>
</dbReference>
<dbReference type="EMBL" id="AF022825">
    <property type="protein sequence ID" value="AAB83981.1"/>
    <property type="status" value="JOINED"/>
    <property type="molecule type" value="Genomic_DNA"/>
</dbReference>
<dbReference type="EMBL" id="AF022826">
    <property type="protein sequence ID" value="AAB83981.1"/>
    <property type="status" value="JOINED"/>
    <property type="molecule type" value="Genomic_DNA"/>
</dbReference>
<dbReference type="EMBL" id="AF022827">
    <property type="protein sequence ID" value="AAB83981.1"/>
    <property type="status" value="JOINED"/>
    <property type="molecule type" value="Genomic_DNA"/>
</dbReference>
<dbReference type="EMBL" id="AF022829">
    <property type="protein sequence ID" value="AAB83981.1"/>
    <property type="status" value="JOINED"/>
    <property type="molecule type" value="Genomic_DNA"/>
</dbReference>
<dbReference type="EMBL" id="AF022831">
    <property type="protein sequence ID" value="AAB83981.1"/>
    <property type="status" value="JOINED"/>
    <property type="molecule type" value="Genomic_DNA"/>
</dbReference>
<dbReference type="EMBL" id="AF022833">
    <property type="protein sequence ID" value="AAB83981.1"/>
    <property type="status" value="JOINED"/>
    <property type="molecule type" value="Genomic_DNA"/>
</dbReference>
<dbReference type="EMBL" id="AF022835">
    <property type="protein sequence ID" value="AAB83981.1"/>
    <property type="status" value="JOINED"/>
    <property type="molecule type" value="Genomic_DNA"/>
</dbReference>
<dbReference type="EMBL" id="AF022837">
    <property type="protein sequence ID" value="AAB83981.1"/>
    <property type="status" value="JOINED"/>
    <property type="molecule type" value="Genomic_DNA"/>
</dbReference>
<dbReference type="EMBL" id="AF022847">
    <property type="protein sequence ID" value="AAB83981.1"/>
    <property type="status" value="JOINED"/>
    <property type="molecule type" value="Genomic_DNA"/>
</dbReference>
<dbReference type="EMBL" id="AF022846">
    <property type="protein sequence ID" value="AAB83981.1"/>
    <property type="status" value="JOINED"/>
    <property type="molecule type" value="Genomic_DNA"/>
</dbReference>
<dbReference type="EMBL" id="AF022845">
    <property type="protein sequence ID" value="AAB83981.1"/>
    <property type="status" value="JOINED"/>
    <property type="molecule type" value="Genomic_DNA"/>
</dbReference>
<dbReference type="EMBL" id="AF022844">
    <property type="protein sequence ID" value="AAB83981.1"/>
    <property type="status" value="JOINED"/>
    <property type="molecule type" value="Genomic_DNA"/>
</dbReference>
<dbReference type="EMBL" id="AF022843">
    <property type="protein sequence ID" value="AAB83981.1"/>
    <property type="status" value="JOINED"/>
    <property type="molecule type" value="Genomic_DNA"/>
</dbReference>
<dbReference type="EMBL" id="AF022842">
    <property type="protein sequence ID" value="AAB83981.1"/>
    <property type="status" value="JOINED"/>
    <property type="molecule type" value="Genomic_DNA"/>
</dbReference>
<dbReference type="EMBL" id="AF022841">
    <property type="protein sequence ID" value="AAB83981.1"/>
    <property type="status" value="JOINED"/>
    <property type="molecule type" value="Genomic_DNA"/>
</dbReference>
<dbReference type="EMBL" id="AF022840">
    <property type="protein sequence ID" value="AAB83981.1"/>
    <property type="status" value="JOINED"/>
    <property type="molecule type" value="Genomic_DNA"/>
</dbReference>
<dbReference type="EMBL" id="AF022838">
    <property type="protein sequence ID" value="AAB83981.1"/>
    <property type="status" value="JOINED"/>
    <property type="molecule type" value="Genomic_DNA"/>
</dbReference>
<dbReference type="EMBL" id="AF022852">
    <property type="protein sequence ID" value="AAB83981.1"/>
    <property type="status" value="JOINED"/>
    <property type="molecule type" value="Genomic_DNA"/>
</dbReference>
<dbReference type="EMBL" id="AF022851">
    <property type="protein sequence ID" value="AAB83981.1"/>
    <property type="status" value="JOINED"/>
    <property type="molecule type" value="Genomic_DNA"/>
</dbReference>
<dbReference type="EMBL" id="AF022850">
    <property type="protein sequence ID" value="AAB83981.1"/>
    <property type="status" value="JOINED"/>
    <property type="molecule type" value="Genomic_DNA"/>
</dbReference>
<dbReference type="EMBL" id="AF022849">
    <property type="protein sequence ID" value="AAB83981.1"/>
    <property type="status" value="JOINED"/>
    <property type="molecule type" value="Genomic_DNA"/>
</dbReference>
<dbReference type="EMBL" id="AF022848">
    <property type="protein sequence ID" value="AAB83981.1"/>
    <property type="status" value="JOINED"/>
    <property type="molecule type" value="Genomic_DNA"/>
</dbReference>
<dbReference type="EMBL" id="AF022836">
    <property type="protein sequence ID" value="AAB83981.1"/>
    <property type="status" value="JOINED"/>
    <property type="molecule type" value="Genomic_DNA"/>
</dbReference>
<dbReference type="EMBL" id="AF022834">
    <property type="protein sequence ID" value="AAB83981.1"/>
    <property type="status" value="JOINED"/>
    <property type="molecule type" value="Genomic_DNA"/>
</dbReference>
<dbReference type="EMBL" id="AF022832">
    <property type="protein sequence ID" value="AAB83981.1"/>
    <property type="status" value="JOINED"/>
    <property type="molecule type" value="Genomic_DNA"/>
</dbReference>
<dbReference type="EMBL" id="AF022830">
    <property type="protein sequence ID" value="AAB83981.1"/>
    <property type="status" value="JOINED"/>
    <property type="molecule type" value="Genomic_DNA"/>
</dbReference>
<dbReference type="EMBL" id="AF022828">
    <property type="protein sequence ID" value="AAB83981.1"/>
    <property type="status" value="JOINED"/>
    <property type="molecule type" value="Genomic_DNA"/>
</dbReference>
<dbReference type="EMBL" id="AF022853">
    <property type="protein sequence ID" value="AAB83983.1"/>
    <property type="molecule type" value="Genomic_DNA"/>
</dbReference>
<dbReference type="EMBL" id="AF022824">
    <property type="protein sequence ID" value="AAB83983.1"/>
    <property type="status" value="JOINED"/>
    <property type="molecule type" value="Genomic_DNA"/>
</dbReference>
<dbReference type="EMBL" id="AF022825">
    <property type="protein sequence ID" value="AAB83983.1"/>
    <property type="status" value="JOINED"/>
    <property type="molecule type" value="Genomic_DNA"/>
</dbReference>
<dbReference type="EMBL" id="AF022826">
    <property type="protein sequence ID" value="AAB83983.1"/>
    <property type="status" value="JOINED"/>
    <property type="molecule type" value="Genomic_DNA"/>
</dbReference>
<dbReference type="EMBL" id="AF022827">
    <property type="protein sequence ID" value="AAB83983.1"/>
    <property type="status" value="JOINED"/>
    <property type="molecule type" value="Genomic_DNA"/>
</dbReference>
<dbReference type="EMBL" id="AF022828">
    <property type="protein sequence ID" value="AAB83983.1"/>
    <property type="status" value="JOINED"/>
    <property type="molecule type" value="Genomic_DNA"/>
</dbReference>
<dbReference type="EMBL" id="AF022829">
    <property type="protein sequence ID" value="AAB83983.1"/>
    <property type="status" value="JOINED"/>
    <property type="molecule type" value="Genomic_DNA"/>
</dbReference>
<dbReference type="EMBL" id="AF022830">
    <property type="protein sequence ID" value="AAB83983.1"/>
    <property type="status" value="JOINED"/>
    <property type="molecule type" value="Genomic_DNA"/>
</dbReference>
<dbReference type="EMBL" id="AF022831">
    <property type="protein sequence ID" value="AAB83983.1"/>
    <property type="status" value="JOINED"/>
    <property type="molecule type" value="Genomic_DNA"/>
</dbReference>
<dbReference type="EMBL" id="AF022832">
    <property type="protein sequence ID" value="AAB83983.1"/>
    <property type="status" value="JOINED"/>
    <property type="molecule type" value="Genomic_DNA"/>
</dbReference>
<dbReference type="EMBL" id="AF022833">
    <property type="protein sequence ID" value="AAB83983.1"/>
    <property type="status" value="JOINED"/>
    <property type="molecule type" value="Genomic_DNA"/>
</dbReference>
<dbReference type="EMBL" id="AF022834">
    <property type="protein sequence ID" value="AAB83983.1"/>
    <property type="status" value="JOINED"/>
    <property type="molecule type" value="Genomic_DNA"/>
</dbReference>
<dbReference type="EMBL" id="AF022835">
    <property type="protein sequence ID" value="AAB83983.1"/>
    <property type="status" value="JOINED"/>
    <property type="molecule type" value="Genomic_DNA"/>
</dbReference>
<dbReference type="EMBL" id="AF022836">
    <property type="protein sequence ID" value="AAB83983.1"/>
    <property type="status" value="JOINED"/>
    <property type="molecule type" value="Genomic_DNA"/>
</dbReference>
<dbReference type="EMBL" id="AF022837">
    <property type="protein sequence ID" value="AAB83983.1"/>
    <property type="status" value="JOINED"/>
    <property type="molecule type" value="Genomic_DNA"/>
</dbReference>
<dbReference type="EMBL" id="AF022838">
    <property type="protein sequence ID" value="AAB83983.1"/>
    <property type="status" value="JOINED"/>
    <property type="molecule type" value="Genomic_DNA"/>
</dbReference>
<dbReference type="EMBL" id="AF022839">
    <property type="protein sequence ID" value="AAB83983.1"/>
    <property type="status" value="JOINED"/>
    <property type="molecule type" value="Genomic_DNA"/>
</dbReference>
<dbReference type="EMBL" id="AF022840">
    <property type="protein sequence ID" value="AAB83983.1"/>
    <property type="status" value="JOINED"/>
    <property type="molecule type" value="Genomic_DNA"/>
</dbReference>
<dbReference type="EMBL" id="AF022841">
    <property type="protein sequence ID" value="AAB83983.1"/>
    <property type="status" value="JOINED"/>
    <property type="molecule type" value="Genomic_DNA"/>
</dbReference>
<dbReference type="EMBL" id="AF022842">
    <property type="protein sequence ID" value="AAB83983.1"/>
    <property type="status" value="JOINED"/>
    <property type="molecule type" value="Genomic_DNA"/>
</dbReference>
<dbReference type="EMBL" id="AF022843">
    <property type="protein sequence ID" value="AAB83983.1"/>
    <property type="status" value="JOINED"/>
    <property type="molecule type" value="Genomic_DNA"/>
</dbReference>
<dbReference type="EMBL" id="AF022844">
    <property type="protein sequence ID" value="AAB83983.1"/>
    <property type="status" value="JOINED"/>
    <property type="molecule type" value="Genomic_DNA"/>
</dbReference>
<dbReference type="EMBL" id="AF022845">
    <property type="protein sequence ID" value="AAB83983.1"/>
    <property type="status" value="JOINED"/>
    <property type="molecule type" value="Genomic_DNA"/>
</dbReference>
<dbReference type="EMBL" id="AF022846">
    <property type="protein sequence ID" value="AAB83983.1"/>
    <property type="status" value="JOINED"/>
    <property type="molecule type" value="Genomic_DNA"/>
</dbReference>
<dbReference type="EMBL" id="AF022847">
    <property type="protein sequence ID" value="AAB83983.1"/>
    <property type="status" value="JOINED"/>
    <property type="molecule type" value="Genomic_DNA"/>
</dbReference>
<dbReference type="EMBL" id="AF022848">
    <property type="protein sequence ID" value="AAB83983.1"/>
    <property type="status" value="JOINED"/>
    <property type="molecule type" value="Genomic_DNA"/>
</dbReference>
<dbReference type="EMBL" id="AF022849">
    <property type="protein sequence ID" value="AAB83983.1"/>
    <property type="status" value="JOINED"/>
    <property type="molecule type" value="Genomic_DNA"/>
</dbReference>
<dbReference type="EMBL" id="AF022850">
    <property type="protein sequence ID" value="AAB83983.1"/>
    <property type="status" value="JOINED"/>
    <property type="molecule type" value="Genomic_DNA"/>
</dbReference>
<dbReference type="EMBL" id="AF022851">
    <property type="protein sequence ID" value="AAB83983.1"/>
    <property type="status" value="JOINED"/>
    <property type="molecule type" value="Genomic_DNA"/>
</dbReference>
<dbReference type="EMBL" id="EF419769">
    <property type="protein sequence ID" value="ABN79590.1"/>
    <property type="molecule type" value="Genomic_DNA"/>
</dbReference>
<dbReference type="EMBL" id="AC025778">
    <property type="status" value="NOT_ANNOTATED_CDS"/>
    <property type="molecule type" value="Genomic_DNA"/>
</dbReference>
<dbReference type="EMBL" id="AC130651">
    <property type="status" value="NOT_ANNOTATED_CDS"/>
    <property type="molecule type" value="Genomic_DNA"/>
</dbReference>
<dbReference type="EMBL" id="AC136624">
    <property type="status" value="NOT_ANNOTATED_CDS"/>
    <property type="molecule type" value="Genomic_DNA"/>
</dbReference>
<dbReference type="EMBL" id="AB209120">
    <property type="protein sequence ID" value="BAD92357.1"/>
    <property type="molecule type" value="mRNA"/>
</dbReference>
<dbReference type="EMBL" id="U91318">
    <property type="protein sequence ID" value="AAC15784.1"/>
    <property type="molecule type" value="Genomic_DNA"/>
</dbReference>
<dbReference type="EMBL" id="AC003026">
    <property type="protein sequence ID" value="AAC05808.1"/>
    <property type="molecule type" value="Genomic_DNA"/>
</dbReference>
<dbReference type="CCDS" id="CCDS42122.1">
    <molecule id="P33527-1"/>
</dbReference>
<dbReference type="CCDS" id="CCDS45427.1">
    <molecule id="P33527-2"/>
</dbReference>
<dbReference type="PIR" id="A44231">
    <property type="entry name" value="DVHUAR"/>
</dbReference>
<dbReference type="RefSeq" id="NP_004987.2">
    <molecule id="P33527-1"/>
    <property type="nucleotide sequence ID" value="NM_004996.4"/>
</dbReference>
<dbReference type="RefSeq" id="NP_063915.2">
    <molecule id="P33527-2"/>
    <property type="nucleotide sequence ID" value="NM_019862.3"/>
</dbReference>
<dbReference type="RefSeq" id="XP_047290105.1">
    <molecule id="P33527-5"/>
    <property type="nucleotide sequence ID" value="XM_047434149.1"/>
</dbReference>
<dbReference type="RefSeq" id="XP_054185061.1">
    <molecule id="P33527-5"/>
    <property type="nucleotide sequence ID" value="XM_054329086.1"/>
</dbReference>
<dbReference type="RefSeq" id="XP_054236345.1">
    <molecule id="P33527-5"/>
    <property type="nucleotide sequence ID" value="XM_054380370.1"/>
</dbReference>
<dbReference type="PDB" id="2CBZ">
    <property type="method" value="X-ray"/>
    <property type="resolution" value="1.50 A"/>
    <property type="chains" value="A=642-871"/>
</dbReference>
<dbReference type="PDB" id="4C3Z">
    <property type="method" value="X-ray"/>
    <property type="resolution" value="2.10 A"/>
    <property type="chains" value="A=628-881"/>
</dbReference>
<dbReference type="PDB" id="8VT4">
    <property type="method" value="EM"/>
    <property type="resolution" value="3.79 A"/>
    <property type="chains" value="A/B=1-1531"/>
</dbReference>
<dbReference type="PDB" id="8VUX">
    <property type="method" value="EM"/>
    <property type="resolution" value="3.54 A"/>
    <property type="chains" value="A/B=1-1531"/>
</dbReference>
<dbReference type="PDB" id="8VVC">
    <property type="method" value="EM"/>
    <property type="resolution" value="4.32 A"/>
    <property type="chains" value="A=1-1531"/>
</dbReference>
<dbReference type="PDBsum" id="2CBZ"/>
<dbReference type="PDBsum" id="4C3Z"/>
<dbReference type="PDBsum" id="8VT4"/>
<dbReference type="PDBsum" id="8VUX"/>
<dbReference type="PDBsum" id="8VVC"/>
<dbReference type="EMDB" id="EMD-43518"/>
<dbReference type="EMDB" id="EMD-43543"/>
<dbReference type="EMDB" id="EMD-43550"/>
<dbReference type="SMR" id="P33527"/>
<dbReference type="BioGRID" id="110503">
    <property type="interactions" value="170"/>
</dbReference>
<dbReference type="FunCoup" id="P33527">
    <property type="interactions" value="1345"/>
</dbReference>
<dbReference type="IntAct" id="P33527">
    <property type="interactions" value="35"/>
</dbReference>
<dbReference type="MINT" id="P33527"/>
<dbReference type="STRING" id="9606.ENSP00000382342"/>
<dbReference type="BindingDB" id="P33527"/>
<dbReference type="ChEMBL" id="CHEMBL3004"/>
<dbReference type="DrugBank" id="DB05812">
    <property type="generic name" value="Abiraterone"/>
</dbReference>
<dbReference type="DrugBank" id="DB13783">
    <property type="generic name" value="Acemetacin"/>
</dbReference>
<dbReference type="DrugBank" id="DB00345">
    <property type="generic name" value="Aminohippuric acid"/>
</dbReference>
<dbReference type="DrugBank" id="DB00701">
    <property type="generic name" value="Amprenavir"/>
</dbReference>
<dbReference type="DrugBank" id="DB01072">
    <property type="generic name" value="Atazanavir"/>
</dbReference>
<dbReference type="DrugBank" id="DB01076">
    <property type="generic name" value="Atorvastatin"/>
</dbReference>
<dbReference type="DrugBank" id="DB00171">
    <property type="generic name" value="ATP"/>
</dbReference>
<dbReference type="DrugBank" id="DB15719">
    <property type="generic name" value="Belantamab mafodotin"/>
</dbReference>
<dbReference type="DrugBank" id="DB12319">
    <property type="generic name" value="Benzbromarone"/>
</dbReference>
<dbReference type="DrugBank" id="DB04851">
    <property type="generic name" value="Biricodar"/>
</dbReference>
<dbReference type="DrugBank" id="DB09061">
    <property type="generic name" value="Cannabidiol"/>
</dbReference>
<dbReference type="DrugBank" id="DB14737">
    <property type="generic name" value="Cannabinol"/>
</dbReference>
<dbReference type="DrugBank" id="DB02659">
    <property type="generic name" value="Cholic Acid"/>
</dbReference>
<dbReference type="DrugBank" id="DB00845">
    <property type="generic name" value="Clofazimine"/>
</dbReference>
<dbReference type="DrugBank" id="DB00286">
    <property type="generic name" value="Conjugated estrogens"/>
</dbReference>
<dbReference type="DrugBank" id="DB00115">
    <property type="generic name" value="Cyanocobalamin"/>
</dbReference>
<dbReference type="DrugBank" id="DB00970">
    <property type="generic name" value="Dactinomycin"/>
</dbReference>
<dbReference type="DrugBank" id="DB00694">
    <property type="generic name" value="Daunorubicin"/>
</dbReference>
<dbReference type="DrugBank" id="DB09213">
    <property type="generic name" value="Dexibuprofen"/>
</dbReference>
<dbReference type="DrugBank" id="DB00586">
    <property type="generic name" value="Diclofenac"/>
</dbReference>
<dbReference type="DrugBank" id="DB01248">
    <property type="generic name" value="Docetaxel"/>
</dbReference>
<dbReference type="DrugBank" id="DB00997">
    <property type="generic name" value="Doxorubicin"/>
</dbReference>
<dbReference type="DrugBank" id="DB00470">
    <property type="generic name" value="Dronabinol"/>
</dbReference>
<dbReference type="DrugBank" id="DB00445">
    <property type="generic name" value="Epirubicin"/>
</dbReference>
<dbReference type="DrugBank" id="DB00773">
    <property type="generic name" value="Etoposide"/>
</dbReference>
<dbReference type="DrugBank" id="DB08868">
    <property type="generic name" value="Fingolimod"/>
</dbReference>
<dbReference type="DrugBank" id="DB00693">
    <property type="generic name" value="Fluorescein"/>
</dbReference>
<dbReference type="DrugBank" id="DB00499">
    <property type="generic name" value="Flutamide"/>
</dbReference>
<dbReference type="DrugBank" id="DB01645">
    <property type="generic name" value="Genistein"/>
</dbReference>
<dbReference type="DrugBank" id="DB00143">
    <property type="generic name" value="Glutathione"/>
</dbReference>
<dbReference type="DrugBank" id="DB01016">
    <property type="generic name" value="Glyburide"/>
</dbReference>
<dbReference type="DrugBank" id="DB00365">
    <property type="generic name" value="Grepafloxacin"/>
</dbReference>
<dbReference type="DrugBank" id="DB01050">
    <property type="generic name" value="Ibuprofen"/>
</dbReference>
<dbReference type="DrugBank" id="DB01177">
    <property type="generic name" value="Idarubicin"/>
</dbReference>
<dbReference type="DrugBank" id="DB00619">
    <property type="generic name" value="Imatinib"/>
</dbReference>
<dbReference type="DrugBank" id="DB00224">
    <property type="generic name" value="Indinavir"/>
</dbReference>
<dbReference type="DrugBank" id="DB00328">
    <property type="generic name" value="Indomethacin"/>
</dbReference>
<dbReference type="DrugBank" id="DB00762">
    <property type="generic name" value="Irinotecan"/>
</dbReference>
<dbReference type="DrugBank" id="DB00602">
    <property type="generic name" value="Ivermectin"/>
</dbReference>
<dbReference type="DrugBank" id="DB00709">
    <property type="generic name" value="Lamivudine"/>
</dbReference>
<dbReference type="DrugBank" id="DB08855">
    <property type="generic name" value="Leukotriene C4"/>
</dbReference>
<dbReference type="DrugBank" id="DB14009">
    <property type="generic name" value="Medical Cannabis"/>
</dbReference>
<dbReference type="DrugBank" id="DB00563">
    <property type="generic name" value="Methotrexate"/>
</dbReference>
<dbReference type="DrugBank" id="DB00834">
    <property type="generic name" value="Mifepristone"/>
</dbReference>
<dbReference type="DrugBank" id="DB01204">
    <property type="generic name" value="Mitoxantrone"/>
</dbReference>
<dbReference type="DrugBank" id="DB02375">
    <property type="generic name" value="Myricetin"/>
</dbReference>
<dbReference type="DrugBank" id="DB14011">
    <property type="generic name" value="Nabiximols"/>
</dbReference>
<dbReference type="DrugBank" id="DB03467">
    <property type="generic name" value="Naringenin"/>
</dbReference>
<dbReference type="DrugBank" id="DB01165">
    <property type="generic name" value="Ofloxacin"/>
</dbReference>
<dbReference type="DrugBank" id="DB01229">
    <property type="generic name" value="Paclitaxel"/>
</dbReference>
<dbReference type="DrugBank" id="DB01174">
    <property type="generic name" value="Phenobarbital"/>
</dbReference>
<dbReference type="DrugBank" id="DB01708">
    <property type="generic name" value="Prasterone"/>
</dbReference>
<dbReference type="DrugBank" id="DB01032">
    <property type="generic name" value="Probenecid"/>
</dbReference>
<dbReference type="DrugBank" id="DB00396">
    <property type="generic name" value="Progesterone"/>
</dbReference>
<dbReference type="DrugBank" id="DB04216">
    <property type="generic name" value="Quercetin"/>
</dbReference>
<dbReference type="DrugBank" id="DB03825">
    <property type="generic name" value="Rhodamine 6G"/>
</dbReference>
<dbReference type="DrugBank" id="DB01045">
    <property type="generic name" value="Rifampin"/>
</dbReference>
<dbReference type="DrugBank" id="DB00503">
    <property type="generic name" value="Ritonavir"/>
</dbReference>
<dbReference type="DrugBank" id="DB06176">
    <property type="generic name" value="Romidepsin"/>
</dbReference>
<dbReference type="DrugBank" id="DB01232">
    <property type="generic name" value="Saquinavir"/>
</dbReference>
<dbReference type="DrugBank" id="DB06335">
    <property type="generic name" value="Saxagliptin"/>
</dbReference>
<dbReference type="DrugBank" id="DB01138">
    <property type="generic name" value="Sulfinpyrazone"/>
</dbReference>
<dbReference type="DrugBank" id="DB04348">
    <property type="generic name" value="Taurocholic acid"/>
</dbReference>
<dbReference type="DrugBank" id="DB09161">
    <property type="generic name" value="Technetium Tc-99m sestamibi"/>
</dbReference>
<dbReference type="DrugBank" id="DB14962">
    <property type="generic name" value="Trastuzumab deruxtecan"/>
</dbReference>
<dbReference type="DrugBank" id="DB05294">
    <property type="generic name" value="Vandetanib"/>
</dbReference>
<dbReference type="DrugBank" id="DB08881">
    <property type="generic name" value="Vemurafenib"/>
</dbReference>
<dbReference type="DrugBank" id="DB00661">
    <property type="generic name" value="Verapamil"/>
</dbReference>
<dbReference type="DrugBank" id="DB00570">
    <property type="generic name" value="Vinblastine"/>
</dbReference>
<dbReference type="DrugBank" id="DB00541">
    <property type="generic name" value="Vincristine"/>
</dbReference>
<dbReference type="DrugBank" id="DB00399">
    <property type="generic name" value="Zoledronic acid"/>
</dbReference>
<dbReference type="DrugCentral" id="P33527"/>
<dbReference type="GuidetoPHARMACOLOGY" id="779"/>
<dbReference type="SwissLipids" id="SLP:000000404"/>
<dbReference type="TCDB" id="3.A.1.208.8">
    <property type="family name" value="the atp-binding cassette (abc) superfamily"/>
</dbReference>
<dbReference type="GlyCosmos" id="P33527">
    <property type="glycosylation" value="3 sites, No reported glycans"/>
</dbReference>
<dbReference type="GlyGen" id="P33527">
    <property type="glycosylation" value="9 sites, 1 N-linked glycan (1 site), 1 O-linked glycan (1 site)"/>
</dbReference>
<dbReference type="iPTMnet" id="P33527"/>
<dbReference type="MetOSite" id="P33527"/>
<dbReference type="PhosphoSitePlus" id="P33527"/>
<dbReference type="SwissPalm" id="P33527"/>
<dbReference type="BioMuta" id="ABCC1"/>
<dbReference type="DMDM" id="296439301"/>
<dbReference type="jPOST" id="P33527"/>
<dbReference type="MassIVE" id="P33527"/>
<dbReference type="PaxDb" id="9606-ENSP00000382342"/>
<dbReference type="PeptideAtlas" id="P33527"/>
<dbReference type="ProteomicsDB" id="54912">
    <molecule id="P33527-1"/>
</dbReference>
<dbReference type="ProteomicsDB" id="54913">
    <molecule id="P33527-2"/>
</dbReference>
<dbReference type="ProteomicsDB" id="54914">
    <molecule id="P33527-3"/>
</dbReference>
<dbReference type="ProteomicsDB" id="54915">
    <molecule id="P33527-4"/>
</dbReference>
<dbReference type="ProteomicsDB" id="54916">
    <molecule id="P33527-5"/>
</dbReference>
<dbReference type="ProteomicsDB" id="54917">
    <molecule id="P33527-6"/>
</dbReference>
<dbReference type="ProteomicsDB" id="54918">
    <molecule id="P33527-7"/>
</dbReference>
<dbReference type="ProteomicsDB" id="54919">
    <molecule id="P33527-8"/>
</dbReference>
<dbReference type="ProteomicsDB" id="54920">
    <molecule id="P33527-9"/>
</dbReference>
<dbReference type="Pumba" id="P33527"/>
<dbReference type="ABCD" id="P33527">
    <property type="antibodies" value="1 sequenced antibody"/>
</dbReference>
<dbReference type="Antibodypedia" id="4235">
    <property type="antibodies" value="591 antibodies from 49 providers"/>
</dbReference>
<dbReference type="DNASU" id="4363"/>
<dbReference type="Ensembl" id="ENST00000399408.7">
    <molecule id="P33527-9"/>
    <property type="protein sequence ID" value="ENSP00000382340.4"/>
    <property type="gene ID" value="ENSG00000103222.20"/>
</dbReference>
<dbReference type="Ensembl" id="ENST00000399410.8">
    <molecule id="P33527-1"/>
    <property type="protein sequence ID" value="ENSP00000382342.3"/>
    <property type="gene ID" value="ENSG00000103222.20"/>
</dbReference>
<dbReference type="Ensembl" id="ENST00000572882.3">
    <molecule id="P33527-2"/>
    <property type="protein sequence ID" value="ENSP00000461615.2"/>
    <property type="gene ID" value="ENSG00000103222.20"/>
</dbReference>
<dbReference type="Ensembl" id="ENST00000621144.4">
    <molecule id="P33527-1"/>
    <property type="protein sequence ID" value="ENSP00000483316.1"/>
    <property type="gene ID" value="ENSG00000278183.4"/>
</dbReference>
<dbReference type="GeneID" id="4363"/>
<dbReference type="KEGG" id="hsa:4363"/>
<dbReference type="MANE-Select" id="ENST00000399410.8">
    <property type="protein sequence ID" value="ENSP00000382342.3"/>
    <property type="RefSeq nucleotide sequence ID" value="NM_004996.4"/>
    <property type="RefSeq protein sequence ID" value="NP_004987.2"/>
</dbReference>
<dbReference type="UCSC" id="uc010bvi.4">
    <molecule id="P33527-1"/>
    <property type="organism name" value="human"/>
</dbReference>
<dbReference type="AGR" id="HGNC:51"/>
<dbReference type="CTD" id="4363"/>
<dbReference type="DisGeNET" id="4363"/>
<dbReference type="GeneCards" id="ABCC1"/>
<dbReference type="HGNC" id="HGNC:51">
    <property type="gene designation" value="ABCC1"/>
</dbReference>
<dbReference type="HPA" id="ENSG00000103222">
    <property type="expression patterns" value="Low tissue specificity"/>
</dbReference>
<dbReference type="MalaCards" id="ABCC1"/>
<dbReference type="MIM" id="158343">
    <property type="type" value="gene"/>
</dbReference>
<dbReference type="MIM" id="618915">
    <property type="type" value="phenotype"/>
</dbReference>
<dbReference type="neXtProt" id="NX_P33527"/>
<dbReference type="OpenTargets" id="ENSG00000103222"/>
<dbReference type="Orphanet" id="90635">
    <property type="disease" value="Rare autosomal dominant non-syndromic sensorineural deafness type DFNA"/>
</dbReference>
<dbReference type="PharmGKB" id="PA244"/>
<dbReference type="VEuPathDB" id="HostDB:ENSG00000103222"/>
<dbReference type="eggNOG" id="KOG0054">
    <property type="taxonomic scope" value="Eukaryota"/>
</dbReference>
<dbReference type="GeneTree" id="ENSGT00940000160271"/>
<dbReference type="InParanoid" id="P33527"/>
<dbReference type="OMA" id="CFETGMR"/>
<dbReference type="OrthoDB" id="6500128at2759"/>
<dbReference type="PAN-GO" id="P33527">
    <property type="GO annotations" value="5 GO annotations based on evolutionary models"/>
</dbReference>
<dbReference type="PhylomeDB" id="P33527"/>
<dbReference type="TreeFam" id="TF105199"/>
<dbReference type="BioCyc" id="MetaCyc:ENSG00000103222-MONOMER"/>
<dbReference type="BRENDA" id="7.6.2.2">
    <property type="organism ID" value="2681"/>
</dbReference>
<dbReference type="BRENDA" id="7.6.2.3">
    <property type="organism ID" value="2681"/>
</dbReference>
<dbReference type="PathwayCommons" id="P33527"/>
<dbReference type="Reactome" id="R-HSA-1660661">
    <property type="pathway name" value="Sphingolipid de novo biosynthesis"/>
</dbReference>
<dbReference type="Reactome" id="R-HSA-189483">
    <property type="pathway name" value="Heme degradation"/>
</dbReference>
<dbReference type="Reactome" id="R-HSA-2142691">
    <property type="pathway name" value="Synthesis of Leukotrienes (LT) and Eoxins (EX)"/>
</dbReference>
<dbReference type="Reactome" id="R-HSA-382556">
    <property type="pathway name" value="ABC-family proteins mediated transport"/>
</dbReference>
<dbReference type="Reactome" id="R-HSA-9707564">
    <property type="pathway name" value="Cytoprotection by HMOX1"/>
</dbReference>
<dbReference type="Reactome" id="R-HSA-9753281">
    <property type="pathway name" value="Paracetamol ADME"/>
</dbReference>
<dbReference type="Reactome" id="R-HSA-9758890">
    <property type="pathway name" value="Transport of RCbl within the body"/>
</dbReference>
<dbReference type="Reactome" id="R-HSA-9818032">
    <property type="pathway name" value="NFE2L2 regulating MDR associated enzymes"/>
</dbReference>
<dbReference type="SignaLink" id="P33527"/>
<dbReference type="SIGNOR" id="P33527"/>
<dbReference type="BioGRID-ORCS" id="4363">
    <property type="hits" value="16 hits in 1168 CRISPR screens"/>
</dbReference>
<dbReference type="ChiTaRS" id="ABCC1">
    <property type="organism name" value="human"/>
</dbReference>
<dbReference type="EvolutionaryTrace" id="P33527"/>
<dbReference type="GeneWiki" id="ABCC1"/>
<dbReference type="GenomeRNAi" id="4363"/>
<dbReference type="Pharos" id="P33527">
    <property type="development level" value="Tchem"/>
</dbReference>
<dbReference type="PRO" id="PR:P33527"/>
<dbReference type="Proteomes" id="UP000005640">
    <property type="component" value="Chromosome 16"/>
</dbReference>
<dbReference type="RNAct" id="P33527">
    <property type="molecule type" value="protein"/>
</dbReference>
<dbReference type="Bgee" id="ENSG00000103222">
    <property type="expression patterns" value="Expressed in lower esophagus mucosa and 97 other cell types or tissues"/>
</dbReference>
<dbReference type="ExpressionAtlas" id="P33527">
    <property type="expression patterns" value="baseline and differential"/>
</dbReference>
<dbReference type="GO" id="GO:0016324">
    <property type="term" value="C:apical plasma membrane"/>
    <property type="evidence" value="ECO:0000314"/>
    <property type="project" value="ARUK-UCL"/>
</dbReference>
<dbReference type="GO" id="GO:0009925">
    <property type="term" value="C:basal plasma membrane"/>
    <property type="evidence" value="ECO:0000314"/>
    <property type="project" value="ARUK-UCL"/>
</dbReference>
<dbReference type="GO" id="GO:0016323">
    <property type="term" value="C:basolateral plasma membrane"/>
    <property type="evidence" value="ECO:0000314"/>
    <property type="project" value="CACAO"/>
</dbReference>
<dbReference type="GO" id="GO:0070062">
    <property type="term" value="C:extracellular exosome"/>
    <property type="evidence" value="ECO:0007005"/>
    <property type="project" value="UniProtKB"/>
</dbReference>
<dbReference type="GO" id="GO:0016328">
    <property type="term" value="C:lateral plasma membrane"/>
    <property type="evidence" value="ECO:0000314"/>
    <property type="project" value="ARUK-UCL"/>
</dbReference>
<dbReference type="GO" id="GO:0016020">
    <property type="term" value="C:membrane"/>
    <property type="evidence" value="ECO:0007005"/>
    <property type="project" value="UniProtKB"/>
</dbReference>
<dbReference type="GO" id="GO:0005886">
    <property type="term" value="C:plasma membrane"/>
    <property type="evidence" value="ECO:0000314"/>
    <property type="project" value="BHF-UCL"/>
</dbReference>
<dbReference type="GO" id="GO:0015431">
    <property type="term" value="F:ABC-type glutathione S-conjugate transporter activity"/>
    <property type="evidence" value="ECO:0000250"/>
    <property type="project" value="UniProtKB"/>
</dbReference>
<dbReference type="GO" id="GO:0140359">
    <property type="term" value="F:ABC-type transporter activity"/>
    <property type="evidence" value="ECO:0000314"/>
    <property type="project" value="UniProtKB"/>
</dbReference>
<dbReference type="GO" id="GO:0015420">
    <property type="term" value="F:ABC-type vitamin B12 transporter activity"/>
    <property type="evidence" value="ECO:0000269"/>
    <property type="project" value="Reactome"/>
</dbReference>
<dbReference type="GO" id="GO:0008559">
    <property type="term" value="F:ABC-type xenobiotic transporter activity"/>
    <property type="evidence" value="ECO:0000318"/>
    <property type="project" value="GO_Central"/>
</dbReference>
<dbReference type="GO" id="GO:0005524">
    <property type="term" value="F:ATP binding"/>
    <property type="evidence" value="ECO:0007669"/>
    <property type="project" value="UniProtKB-KW"/>
</dbReference>
<dbReference type="GO" id="GO:0016887">
    <property type="term" value="F:ATP hydrolysis activity"/>
    <property type="evidence" value="ECO:0007669"/>
    <property type="project" value="InterPro"/>
</dbReference>
<dbReference type="GO" id="GO:0043225">
    <property type="term" value="F:ATPase-coupled inorganic anion transmembrane transporter activity"/>
    <property type="evidence" value="ECO:0000304"/>
    <property type="project" value="Reactome"/>
</dbReference>
<dbReference type="GO" id="GO:0034040">
    <property type="term" value="F:ATPase-coupled lipid transmembrane transporter activity"/>
    <property type="evidence" value="ECO:0000315"/>
    <property type="project" value="BHF-UCL"/>
</dbReference>
<dbReference type="GO" id="GO:0042626">
    <property type="term" value="F:ATPase-coupled transmembrane transporter activity"/>
    <property type="evidence" value="ECO:0000304"/>
    <property type="project" value="Reactome"/>
</dbReference>
<dbReference type="GO" id="GO:0046943">
    <property type="term" value="F:carboxylic acid transmembrane transporter activity"/>
    <property type="evidence" value="ECO:0000315"/>
    <property type="project" value="ARUK-UCL"/>
</dbReference>
<dbReference type="GO" id="GO:0015562">
    <property type="term" value="F:efflux transmembrane transporter activity"/>
    <property type="evidence" value="ECO:0000315"/>
    <property type="project" value="ARUK-UCL"/>
</dbReference>
<dbReference type="GO" id="GO:0034634">
    <property type="term" value="F:glutathione transmembrane transporter activity"/>
    <property type="evidence" value="ECO:0000250"/>
    <property type="project" value="ARUK-UCL"/>
</dbReference>
<dbReference type="GO" id="GO:0046624">
    <property type="term" value="F:sphingolipid transporter activity"/>
    <property type="evidence" value="ECO:0000304"/>
    <property type="project" value="Reactome"/>
</dbReference>
<dbReference type="GO" id="GO:0042910">
    <property type="term" value="F:xenobiotic transmembrane transporter activity"/>
    <property type="evidence" value="ECO:0000314"/>
    <property type="project" value="UniProtKB"/>
</dbReference>
<dbReference type="GO" id="GO:1905039">
    <property type="term" value="P:carboxylic acid transmembrane transport"/>
    <property type="evidence" value="ECO:0000315"/>
    <property type="project" value="ARUK-UCL"/>
</dbReference>
<dbReference type="GO" id="GO:0060326">
    <property type="term" value="P:cell chemotaxis"/>
    <property type="evidence" value="ECO:0000250"/>
    <property type="project" value="BHF-UCL"/>
</dbReference>
<dbReference type="GO" id="GO:1904646">
    <property type="term" value="P:cellular response to amyloid-beta"/>
    <property type="evidence" value="ECO:0000250"/>
    <property type="project" value="ARUK-UCL"/>
</dbReference>
<dbReference type="GO" id="GO:0034599">
    <property type="term" value="P:cellular response to oxidative stress"/>
    <property type="evidence" value="ECO:0000304"/>
    <property type="project" value="Reactome"/>
</dbReference>
<dbReference type="GO" id="GO:0015889">
    <property type="term" value="P:cobalamin transport"/>
    <property type="evidence" value="ECO:0000304"/>
    <property type="project" value="Reactome"/>
</dbReference>
<dbReference type="GO" id="GO:0070729">
    <property type="term" value="P:cyclic nucleotide transport"/>
    <property type="evidence" value="ECO:0000315"/>
    <property type="project" value="UniProtKB"/>
</dbReference>
<dbReference type="GO" id="GO:0140115">
    <property type="term" value="P:export across plasma membrane"/>
    <property type="evidence" value="ECO:0000315"/>
    <property type="project" value="ARUK-UCL"/>
</dbReference>
<dbReference type="GO" id="GO:0034775">
    <property type="term" value="P:glutathione transmembrane transport"/>
    <property type="evidence" value="ECO:0000318"/>
    <property type="project" value="GO_Central"/>
</dbReference>
<dbReference type="GO" id="GO:0042167">
    <property type="term" value="P:heme catabolic process"/>
    <property type="evidence" value="ECO:0000304"/>
    <property type="project" value="Reactome"/>
</dbReference>
<dbReference type="GO" id="GO:0006691">
    <property type="term" value="P:leukotriene metabolic process"/>
    <property type="evidence" value="ECO:0000304"/>
    <property type="project" value="Reactome"/>
</dbReference>
<dbReference type="GO" id="GO:0071716">
    <property type="term" value="P:leukotriene transport"/>
    <property type="evidence" value="ECO:0000250"/>
    <property type="project" value="UniProtKB"/>
</dbReference>
<dbReference type="GO" id="GO:0045332">
    <property type="term" value="P:phospholipid translocation"/>
    <property type="evidence" value="ECO:0000315"/>
    <property type="project" value="BHF-UCL"/>
</dbReference>
<dbReference type="GO" id="GO:0050729">
    <property type="term" value="P:positive regulation of inflammatory response"/>
    <property type="evidence" value="ECO:0000250"/>
    <property type="project" value="UniProtKB"/>
</dbReference>
<dbReference type="GO" id="GO:0009410">
    <property type="term" value="P:response to xenobiotic stimulus"/>
    <property type="evidence" value="ECO:0000250"/>
    <property type="project" value="UniProtKB"/>
</dbReference>
<dbReference type="GO" id="GO:0030148">
    <property type="term" value="P:sphingolipid biosynthetic process"/>
    <property type="evidence" value="ECO:0000304"/>
    <property type="project" value="Reactome"/>
</dbReference>
<dbReference type="GO" id="GO:0099039">
    <property type="term" value="P:sphingolipid translocation"/>
    <property type="evidence" value="ECO:0000315"/>
    <property type="project" value="BHF-UCL"/>
</dbReference>
<dbReference type="GO" id="GO:0070633">
    <property type="term" value="P:transepithelial transport"/>
    <property type="evidence" value="ECO:0000315"/>
    <property type="project" value="ARUK-UCL"/>
</dbReference>
<dbReference type="GO" id="GO:0055085">
    <property type="term" value="P:transmembrane transport"/>
    <property type="evidence" value="ECO:0000304"/>
    <property type="project" value="Reactome"/>
</dbReference>
<dbReference type="GO" id="GO:0150104">
    <property type="term" value="P:transport across blood-brain barrier"/>
    <property type="evidence" value="ECO:0000303"/>
    <property type="project" value="ARUK-UCL"/>
</dbReference>
<dbReference type="GO" id="GO:0006805">
    <property type="term" value="P:xenobiotic metabolic process"/>
    <property type="evidence" value="ECO:0000304"/>
    <property type="project" value="Reactome"/>
</dbReference>
<dbReference type="GO" id="GO:0042908">
    <property type="term" value="P:xenobiotic transport"/>
    <property type="evidence" value="ECO:0000250"/>
    <property type="project" value="ARUK-UCL"/>
</dbReference>
<dbReference type="GO" id="GO:1990962">
    <property type="term" value="P:xenobiotic transport across blood-brain barrier"/>
    <property type="evidence" value="ECO:0000315"/>
    <property type="project" value="ARUK-UCL"/>
</dbReference>
<dbReference type="CDD" id="cd18595">
    <property type="entry name" value="ABC_6TM_MRP1_2_3_6_D1_like"/>
    <property type="match status" value="1"/>
</dbReference>
<dbReference type="CDD" id="cd18603">
    <property type="entry name" value="ABC_6TM_MRP1_2_3_6_D2_like"/>
    <property type="match status" value="1"/>
</dbReference>
<dbReference type="CDD" id="cd03250">
    <property type="entry name" value="ABCC_MRP_domain1"/>
    <property type="match status" value="1"/>
</dbReference>
<dbReference type="CDD" id="cd03244">
    <property type="entry name" value="ABCC_MRP_domain2"/>
    <property type="match status" value="1"/>
</dbReference>
<dbReference type="FunFam" id="3.40.50.300:FF:000293">
    <property type="entry name" value="ATP binding cassette subfamily C member 1"/>
    <property type="match status" value="1"/>
</dbReference>
<dbReference type="FunFam" id="1.20.1560.10:FF:000001">
    <property type="entry name" value="ATP-binding cassette subfamily C member 1"/>
    <property type="match status" value="1"/>
</dbReference>
<dbReference type="FunFam" id="1.20.1560.10:FF:000007">
    <property type="entry name" value="ATP-binding cassette subfamily C member 1"/>
    <property type="match status" value="1"/>
</dbReference>
<dbReference type="FunFam" id="3.40.50.300:FF:000074">
    <property type="entry name" value="Multidrug resistance-associated protein 5 isoform 1"/>
    <property type="match status" value="1"/>
</dbReference>
<dbReference type="Gene3D" id="1.20.1560.10">
    <property type="entry name" value="ABC transporter type 1, transmembrane domain"/>
    <property type="match status" value="2"/>
</dbReference>
<dbReference type="Gene3D" id="3.40.50.300">
    <property type="entry name" value="P-loop containing nucleotide triphosphate hydrolases"/>
    <property type="match status" value="2"/>
</dbReference>
<dbReference type="InterPro" id="IPR003593">
    <property type="entry name" value="AAA+_ATPase"/>
</dbReference>
<dbReference type="InterPro" id="IPR011527">
    <property type="entry name" value="ABC1_TM_dom"/>
</dbReference>
<dbReference type="InterPro" id="IPR036640">
    <property type="entry name" value="ABC1_TM_sf"/>
</dbReference>
<dbReference type="InterPro" id="IPR003439">
    <property type="entry name" value="ABC_transporter-like_ATP-bd"/>
</dbReference>
<dbReference type="InterPro" id="IPR017871">
    <property type="entry name" value="ABC_transporter-like_CS"/>
</dbReference>
<dbReference type="InterPro" id="IPR050173">
    <property type="entry name" value="ABC_transporter_C-like"/>
</dbReference>
<dbReference type="InterPro" id="IPR005292">
    <property type="entry name" value="MRP"/>
</dbReference>
<dbReference type="InterPro" id="IPR027417">
    <property type="entry name" value="P-loop_NTPase"/>
</dbReference>
<dbReference type="InterPro" id="IPR056227">
    <property type="entry name" value="TMD0_ABC"/>
</dbReference>
<dbReference type="NCBIfam" id="TIGR00957">
    <property type="entry name" value="MRP_assoc_pro"/>
    <property type="match status" value="1"/>
</dbReference>
<dbReference type="PANTHER" id="PTHR24223">
    <property type="entry name" value="ATP-BINDING CASSETTE SUB-FAMILY C"/>
    <property type="match status" value="1"/>
</dbReference>
<dbReference type="PANTHER" id="PTHR24223:SF241">
    <property type="entry name" value="MULTIDRUG RESISTANCE-ASSOCIATED PROTEIN 1"/>
    <property type="match status" value="1"/>
</dbReference>
<dbReference type="Pfam" id="PF00664">
    <property type="entry name" value="ABC_membrane"/>
    <property type="match status" value="2"/>
</dbReference>
<dbReference type="Pfam" id="PF00005">
    <property type="entry name" value="ABC_tran"/>
    <property type="match status" value="2"/>
</dbReference>
<dbReference type="Pfam" id="PF24357">
    <property type="entry name" value="TMD0_ABC"/>
    <property type="match status" value="1"/>
</dbReference>
<dbReference type="SMART" id="SM00382">
    <property type="entry name" value="AAA"/>
    <property type="match status" value="2"/>
</dbReference>
<dbReference type="SUPFAM" id="SSF90123">
    <property type="entry name" value="ABC transporter transmembrane region"/>
    <property type="match status" value="2"/>
</dbReference>
<dbReference type="SUPFAM" id="SSF52540">
    <property type="entry name" value="P-loop containing nucleoside triphosphate hydrolases"/>
    <property type="match status" value="2"/>
</dbReference>
<dbReference type="PROSITE" id="PS50929">
    <property type="entry name" value="ABC_TM1F"/>
    <property type="match status" value="2"/>
</dbReference>
<dbReference type="PROSITE" id="PS00211">
    <property type="entry name" value="ABC_TRANSPORTER_1"/>
    <property type="match status" value="2"/>
</dbReference>
<dbReference type="PROSITE" id="PS50893">
    <property type="entry name" value="ABC_TRANSPORTER_2"/>
    <property type="match status" value="2"/>
</dbReference>
<name>MRP1_HUMAN</name>
<proteinExistence type="evidence at protein level"/>
<evidence type="ECO:0000250" key="1">
    <source>
        <dbReference type="UniProtKB" id="O35379"/>
    </source>
</evidence>
<evidence type="ECO:0000255" key="2"/>
<evidence type="ECO:0000255" key="3">
    <source>
        <dbReference type="PROSITE-ProRule" id="PRU00434"/>
    </source>
</evidence>
<evidence type="ECO:0000255" key="4">
    <source>
        <dbReference type="PROSITE-ProRule" id="PRU00441"/>
    </source>
</evidence>
<evidence type="ECO:0000269" key="5">
    <source>
    </source>
</evidence>
<evidence type="ECO:0000269" key="6">
    <source>
    </source>
</evidence>
<evidence type="ECO:0000269" key="7">
    <source>
    </source>
</evidence>
<evidence type="ECO:0000269" key="8">
    <source>
    </source>
</evidence>
<evidence type="ECO:0000269" key="9">
    <source>
    </source>
</evidence>
<evidence type="ECO:0000269" key="10">
    <source>
    </source>
</evidence>
<evidence type="ECO:0000269" key="11">
    <source>
    </source>
</evidence>
<evidence type="ECO:0000269" key="12">
    <source>
    </source>
</evidence>
<evidence type="ECO:0000269" key="13">
    <source>
    </source>
</evidence>
<evidence type="ECO:0000269" key="14">
    <source>
    </source>
</evidence>
<evidence type="ECO:0000269" key="15">
    <source>
    </source>
</evidence>
<evidence type="ECO:0000269" key="16">
    <source>
    </source>
</evidence>
<evidence type="ECO:0000269" key="17">
    <source>
    </source>
</evidence>
<evidence type="ECO:0000269" key="18">
    <source>
    </source>
</evidence>
<evidence type="ECO:0000269" key="19">
    <source>
    </source>
</evidence>
<evidence type="ECO:0000269" key="20">
    <source>
    </source>
</evidence>
<evidence type="ECO:0000269" key="21">
    <source>
    </source>
</evidence>
<evidence type="ECO:0000269" key="22">
    <source>
    </source>
</evidence>
<evidence type="ECO:0000269" key="23">
    <source>
    </source>
</evidence>
<evidence type="ECO:0000269" key="24">
    <source>
    </source>
</evidence>
<evidence type="ECO:0000269" key="25">
    <source>
    </source>
</evidence>
<evidence type="ECO:0000269" key="26">
    <source>
    </source>
</evidence>
<evidence type="ECO:0000269" key="27">
    <source>
    </source>
</evidence>
<evidence type="ECO:0000269" key="28">
    <source>
    </source>
</evidence>
<evidence type="ECO:0000269" key="29">
    <source ref="4"/>
</evidence>
<evidence type="ECO:0000303" key="30">
    <source ref="6"/>
</evidence>
<evidence type="ECO:0000305" key="31"/>
<evidence type="ECO:0000305" key="32">
    <source>
    </source>
</evidence>
<evidence type="ECO:0000305" key="33">
    <source>
    </source>
</evidence>
<evidence type="ECO:0000305" key="34">
    <source>
    </source>
</evidence>
<evidence type="ECO:0000312" key="35">
    <source>
        <dbReference type="HGNC" id="HGNC:51"/>
    </source>
</evidence>
<evidence type="ECO:0007744" key="36">
    <source>
    </source>
</evidence>
<evidence type="ECO:0007744" key="37">
    <source>
    </source>
</evidence>
<evidence type="ECO:0007744" key="38">
    <source>
    </source>
</evidence>
<evidence type="ECO:0007744" key="39">
    <source>
    </source>
</evidence>
<evidence type="ECO:0007829" key="40">
    <source>
        <dbReference type="PDB" id="2CBZ"/>
    </source>
</evidence>
<sequence>MALRGFCSADGSDPLWDWNVTWNTSNPDFTKCFQNTVLVWVPCFYLWACFPFYFLYLSRHDRGYIQMTPLNKTKTALGFLLWIVCWADLFYSFWERSRGIFLAPVFLVSPTLLGITMLLATFLIQLERRKGVQSSGIMLTFWLVALVCALAILRSKIMTALKEDAQVDLFRDITFYVYFSLLLIQLVLSCFSDRSPLFSETIHDPNPCPESSASFLSRITFWWITGLIVRGYRQPLEGSDLWSLNKEDTSEQVVPVLVKNWKKECAKTRKQPVKVVYSSKDPAQPKESSKVDANEEVEALIVKSPQKEWNPSLFKVLYKTFGPYFLMSFFFKAIHDLMMFSGPQILKLLIKFVNDTKAPDWQGYFYTVLLFVTACLQTLVLHQYFHICFVSGMRIKTAVIGAVYRKALVITNSARKSSTVGEIVNLMSVDAQRFMDLATYINMIWSAPLQVILALYLLWLNLGPSVLAGVAVMVLMVPVNAVMAMKTKTYQVAHMKSKDNRIKLMNEILNGIKVLKLYAWELAFKDKVLAIRQEELKVLKKSAYLSAVGTFTWVCTPFLVALCTFAVYVTIDENNILDAQTAFVSLALFNILRFPLNILPMVISSIVQASVSLKRLRIFLSHEELEPDSIERRPVKDGGGTNSITVRNATFTWARSDPPTLNGITFSIPEGALVAVVGQVGCGKSSLLSALLAEMDKVEGHVAIKGSVAYVPQQAWIQNDSLRENILFGCQLEEPYYRSVIQACALLPDLEILPSGDRTEIGEKGVNLSGGQKQRVSLARAVYSNADIYLFDDPLSAVDAHVGKHIFENVIGPKGMLKNKTRILVTHSMSYLPQVDVIIVMSGGKISEMGSYQELLARDGAFAEFLRTYASTEQEQDAEENGVTGVSGPGKEAKQMENGMLVTDSAGKQLQRQLSSSSSYSGDISRHHNSTAELQKAEAKKEETWKLMEADKAQTGQVKLSVYWDYMKAIGLFISFLSIFLFMCNHVSALASNYWLSLWTDDPIVNGTQEHTKVRLSVYGALGISQGIAVFGYSMAVSIGGILASRCLHVDLLHSILRSPMSFFERTPSGNLVNRFSKELDTVDSMIPEVIKMFMGSLFNVIGACIVILLATPIAAIIIPPLGLIYFFVQRFYVASSRQLKRLESVSRSPVYSHFNETLLGVSVIRAFEEQERFIHQSDLKVDENQKAYYPSIVANRWLAVRLECVGNCIVLFAALFAVISRHSLSAGLVGLSVSYSLQVTTYLNWLVRMSSEMETNIVAVERLKEYSETEKEAPWQIQETAPPSSWPQVGRVEFRNYCLRYREDLDFVLRHINVTINGGEKVGIVGRTGAGKSSLTLGLFRINESAEGEIIIDGINIAKIGLHDLRFKITIIPQDPVLFSGSLRMNLDPFSQYSDEEVWTSLELAHLKDFVSALPDKLDHECAEGGENLSVGQRQLVCLARALLRKTKILVLDEATAAVDLETDDLIQSTIRTQFEDCTVLTIAHRLNTIMDYTRVIVLDKGEIQEYGAPSDLLQQRGLFYSMAKDAGLV</sequence>
<feature type="chain" id="PRO_0000093351" description="Multidrug resistance-associated protein 1">
    <location>
        <begin position="1"/>
        <end position="1531"/>
    </location>
</feature>
<feature type="topological domain" description="Extracellular">
    <location>
        <begin position="1"/>
        <end position="33"/>
    </location>
</feature>
<feature type="transmembrane region" description="Helical; Name=1">
    <location>
        <begin position="34"/>
        <end position="54"/>
    </location>
</feature>
<feature type="topological domain" description="Cytoplasmic">
    <location>
        <begin position="55"/>
        <end position="74"/>
    </location>
</feature>
<feature type="transmembrane region" description="Helical; Name=2">
    <location>
        <begin position="75"/>
        <end position="95"/>
    </location>
</feature>
<feature type="topological domain" description="Extracellular">
    <location>
        <begin position="96"/>
        <end position="100"/>
    </location>
</feature>
<feature type="transmembrane region" description="Helical; Name=3">
    <location>
        <begin position="101"/>
        <end position="121"/>
    </location>
</feature>
<feature type="topological domain" description="Cytoplasmic">
    <location>
        <begin position="122"/>
        <end position="133"/>
    </location>
</feature>
<feature type="transmembrane region" description="Helical; Name=4">
    <location>
        <begin position="134"/>
        <end position="154"/>
    </location>
</feature>
<feature type="topological domain" description="Extracellular">
    <location>
        <begin position="155"/>
        <end position="172"/>
    </location>
</feature>
<feature type="transmembrane region" description="Helical; Name=5">
    <location>
        <begin position="173"/>
        <end position="193"/>
    </location>
</feature>
<feature type="topological domain" description="Cytoplasmic">
    <location>
        <begin position="194"/>
        <end position="316"/>
    </location>
</feature>
<feature type="transmembrane region" description="Helical; Name=6">
    <location>
        <begin position="317"/>
        <end position="337"/>
    </location>
</feature>
<feature type="topological domain" description="Extracellular">
    <location>
        <begin position="338"/>
        <end position="363"/>
    </location>
</feature>
<feature type="transmembrane region" description="Helical; Name=7">
    <location>
        <begin position="364"/>
        <end position="384"/>
    </location>
</feature>
<feature type="topological domain" description="Cytoplasmic">
    <location>
        <begin position="385"/>
        <end position="440"/>
    </location>
</feature>
<feature type="transmembrane region" description="Helical; Name=8">
    <location>
        <begin position="441"/>
        <end position="461"/>
    </location>
</feature>
<feature type="topological domain" description="Extracellular">
    <location>
        <begin position="462"/>
        <end position="464"/>
    </location>
</feature>
<feature type="transmembrane region" description="Helical; Name=9">
    <location>
        <begin position="465"/>
        <end position="485"/>
    </location>
</feature>
<feature type="topological domain" description="Cytoplasmic">
    <location>
        <begin position="486"/>
        <end position="547"/>
    </location>
</feature>
<feature type="transmembrane region" description="Helical; Name=10">
    <location>
        <begin position="548"/>
        <end position="568"/>
    </location>
</feature>
<feature type="topological domain" description="Extracellular">
    <location>
        <begin position="569"/>
        <end position="590"/>
    </location>
</feature>
<feature type="transmembrane region" description="Helical; Name=11">
    <location>
        <begin position="591"/>
        <end position="611"/>
    </location>
</feature>
<feature type="topological domain" description="Cytoplasmic">
    <location>
        <begin position="612"/>
        <end position="967"/>
    </location>
</feature>
<feature type="transmembrane region" description="Helical; Name=12">
    <location>
        <begin position="968"/>
        <end position="988"/>
    </location>
</feature>
<feature type="topological domain" description="Extracellular">
    <location>
        <begin position="989"/>
        <end position="1025"/>
    </location>
</feature>
<feature type="transmembrane region" description="Helical; Name=13">
    <location>
        <begin position="1026"/>
        <end position="1046"/>
    </location>
</feature>
<feature type="topological domain" description="Cytoplasmic">
    <location>
        <begin position="1047"/>
        <end position="1089"/>
    </location>
</feature>
<feature type="transmembrane region" description="Helical; Name=14">
    <location>
        <begin position="1090"/>
        <end position="1110"/>
    </location>
</feature>
<feature type="topological domain" description="Extracellular">
    <location>
        <position position="1111"/>
    </location>
</feature>
<feature type="transmembrane region" description="Helical; Name=15">
    <location>
        <begin position="1112"/>
        <end position="1132"/>
    </location>
</feature>
<feature type="topological domain" description="Cytoplasmic">
    <location>
        <begin position="1133"/>
        <end position="1203"/>
    </location>
</feature>
<feature type="transmembrane region" description="Helical; Name=16">
    <location>
        <begin position="1204"/>
        <end position="1224"/>
    </location>
</feature>
<feature type="topological domain" description="Extracellular">
    <location>
        <begin position="1225"/>
        <end position="1226"/>
    </location>
</feature>
<feature type="transmembrane region" description="Helical; Name=17">
    <location>
        <begin position="1227"/>
        <end position="1247"/>
    </location>
</feature>
<feature type="topological domain" description="Cytoplasmic">
    <location>
        <begin position="1248"/>
        <end position="1531"/>
    </location>
</feature>
<feature type="domain" description="ABC transmembrane type-1 1" evidence="4">
    <location>
        <begin position="325"/>
        <end position="608"/>
    </location>
</feature>
<feature type="domain" description="ABC transporter 1" evidence="3">
    <location>
        <begin position="644"/>
        <end position="868"/>
    </location>
</feature>
<feature type="domain" description="ABC transmembrane type-1 2" evidence="4">
    <location>
        <begin position="975"/>
        <end position="1256"/>
    </location>
</feature>
<feature type="domain" description="ABC transporter 2" evidence="3">
    <location>
        <begin position="1293"/>
        <end position="1527"/>
    </location>
</feature>
<feature type="binding site">
    <location>
        <position position="653"/>
    </location>
    <ligand>
        <name>ATP</name>
        <dbReference type="ChEBI" id="CHEBI:30616"/>
        <label>1</label>
    </ligand>
</feature>
<feature type="binding site">
    <location>
        <begin position="678"/>
        <end position="685"/>
    </location>
    <ligand>
        <name>ATP</name>
        <dbReference type="ChEBI" id="CHEBI:30616"/>
        <label>1</label>
    </ligand>
</feature>
<feature type="binding site">
    <location>
        <position position="713"/>
    </location>
    <ligand>
        <name>ATP</name>
        <dbReference type="ChEBI" id="CHEBI:30616"/>
        <label>1</label>
    </ligand>
</feature>
<feature type="binding site" evidence="3">
    <location>
        <begin position="1327"/>
        <end position="1334"/>
    </location>
    <ligand>
        <name>ATP</name>
        <dbReference type="ChEBI" id="CHEBI:30616"/>
        <label>2</label>
    </ligand>
</feature>
<feature type="modified residue" description="Phosphotyrosine" evidence="1">
    <location>
        <position position="277"/>
    </location>
</feature>
<feature type="modified residue" description="Phosphoserine" evidence="1">
    <location>
        <position position="289"/>
    </location>
</feature>
<feature type="modified residue" description="N6-succinyllysine" evidence="1">
    <location>
        <position position="503"/>
    </location>
</feature>
<feature type="modified residue" description="Phosphoserine" evidence="37">
    <location>
        <position position="905"/>
    </location>
</feature>
<feature type="modified residue" description="Phosphoserine" evidence="36 39">
    <location>
        <position position="915"/>
    </location>
</feature>
<feature type="modified residue" description="Phosphoserine" evidence="37 38">
    <location>
        <position position="930"/>
    </location>
</feature>
<feature type="glycosylation site" description="N-linked (GlcNAc...) asparagine" evidence="26">
    <location>
        <position position="19"/>
    </location>
</feature>
<feature type="glycosylation site" description="N-linked (GlcNAc...) asparagine" evidence="26">
    <location>
        <position position="23"/>
    </location>
</feature>
<feature type="glycosylation site" description="N-linked (GlcNAc...) asparagine" evidence="26">
    <location>
        <position position="1006"/>
    </location>
</feature>
<feature type="splice variant" id="VSP_000037" description="In isoform 2, isoform 5, isoform 6 and isoform 8." evidence="31">
    <location>
        <begin position="706"/>
        <end position="764"/>
    </location>
</feature>
<feature type="splice variant" id="VSP_000038" description="In isoform 3, isoform 5, isoform 7 and isoform 8." evidence="31">
    <location>
        <begin position="765"/>
        <end position="820"/>
    </location>
</feature>
<feature type="splice variant" id="VSP_017014" description="In isoform 9." evidence="30">
    <original>G</original>
    <variation>GSTVMDEEEAG</variation>
    <location>
        <position position="882"/>
    </location>
</feature>
<feature type="splice variant" id="VSP_000039" description="In isoform 4, isoform 6, isoform 7 and isoform 8." evidence="31">
    <location>
        <begin position="1431"/>
        <end position="1495"/>
    </location>
</feature>
<feature type="sequence variant" id="VAR_013317" description="In dbSNP:rs41395947." evidence="10">
    <original>C</original>
    <variation>S</variation>
    <location>
        <position position="43"/>
    </location>
</feature>
<feature type="sequence variant" id="VAR_013318" description="In dbSNP:rs41494447." evidence="10">
    <original>T</original>
    <variation>I</variation>
    <location>
        <position position="73"/>
    </location>
</feature>
<feature type="sequence variant" id="VAR_013319" evidence="9 15 27">
    <original>M</original>
    <variation>T</variation>
    <location>
        <position position="117"/>
    </location>
</feature>
<feature type="sequence variant" id="VAR_083988" description="In DFNA77; uncertain significance." evidence="22">
    <original>G</original>
    <variation>D</variation>
    <location>
        <position position="231"/>
    </location>
</feature>
<feature type="sequence variant" id="VAR_083989" evidence="22">
    <original>W</original>
    <variation>C</variation>
    <location>
        <position position="242"/>
    </location>
</feature>
<feature type="sequence variant" id="VAR_083990" description="In DFNA77; uncertain significance." evidence="22">
    <original>E</original>
    <variation>V</variation>
    <location>
        <position position="296"/>
    </location>
</feature>
<feature type="sequence variant" id="VAR_013320" description="In dbSNP:rs60782127." evidence="14 20">
    <original>R</original>
    <variation>S</variation>
    <location>
        <position position="433"/>
    </location>
</feature>
<feature type="sequence variant" id="VAR_083991" description="In DFNA77; changes protein subcellular localization expressed in both membrane and cytoplasm; produces unstable mRNA." evidence="22">
    <original>N</original>
    <variation>S</variation>
    <location>
        <position position="590"/>
    </location>
</feature>
<feature type="sequence variant" id="VAR_011488" description="In dbSNP:rs112282109." evidence="7">
    <original>R</original>
    <variation>Q</variation>
    <location>
        <position position="633"/>
    </location>
</feature>
<feature type="sequence variant" id="VAR_011489" description="No effect on leukotriene C4 and estradiol glucuronide transport; dbSNP:rs45511401." evidence="6 7 14 29">
    <original>G</original>
    <variation>V</variation>
    <location>
        <position position="671"/>
    </location>
</feature>
<feature type="sequence variant" id="VAR_013321" description="In dbSNP:rs4148356." evidence="10 29">
    <original>R</original>
    <variation>Q</variation>
    <location>
        <position position="723"/>
    </location>
</feature>
<feature type="sequence variant" id="VAR_055384" description="In dbSNP:rs45517537." evidence="29">
    <original>A</original>
    <variation>T</variation>
    <location>
        <position position="861"/>
    </location>
</feature>
<feature type="sequence variant" id="VAR_083992" evidence="22">
    <original>V</original>
    <variation>I</variation>
    <location>
        <position position="886"/>
    </location>
</feature>
<feature type="sequence variant" id="VAR_083993" evidence="22">
    <original>G</original>
    <variation>R</variation>
    <location>
        <position position="1007"/>
    </location>
</feature>
<feature type="sequence variant" id="VAR_055385" description="In dbSNP:rs13337489." evidence="29">
    <original>C</original>
    <variation>S</variation>
    <location>
        <position position="1047"/>
    </location>
</feature>
<feature type="sequence variant" id="VAR_013322" description="In dbSNP:rs41410450." evidence="10">
    <original>R</original>
    <variation>Q</variation>
    <location>
        <position position="1058"/>
    </location>
</feature>
<feature type="sequence variant" id="VAR_083994" evidence="22">
    <original>M</original>
    <variation>T</variation>
    <location>
        <position position="1086"/>
    </location>
</feature>
<feature type="sequence variant" id="VAR_055386" description="In dbSNP:rs28706727." evidence="29">
    <original>V</original>
    <variation>I</variation>
    <location>
        <position position="1146"/>
    </location>
</feature>
<feature type="sequence variant" id="VAR_013323" description="In dbSNP:rs369410659." evidence="9">
    <original>S</original>
    <variation>L</variation>
    <location>
        <position position="1512"/>
    </location>
</feature>
<feature type="mutagenesis site" description="No effect." evidence="17">
    <original>Q</original>
    <variation>A</variation>
    <location>
        <position position="580"/>
    </location>
</feature>
<feature type="mutagenesis site" description="No effect." evidence="17">
    <original>T</original>
    <variation>A</variation>
    <location>
        <position position="581"/>
    </location>
</feature>
<feature type="mutagenesis site" description="No effect." evidence="17">
    <original>S</original>
    <variation>A</variation>
    <location>
        <position position="585"/>
    </location>
</feature>
<feature type="mutagenesis site" description="Increases resistance to vincristine and decreases resistance to VP-16." evidence="17">
    <original>N</original>
    <variation>A</variation>
    <location>
        <position position="597"/>
    </location>
</feature>
<feature type="mutagenesis site" description="Increases estradiol glucuronide transport." evidence="17">
    <original>S</original>
    <variation>A</variation>
    <location>
        <position position="604"/>
    </location>
</feature>
<feature type="mutagenesis site" description="Decreases resistance to vincristine, VP-16 and doxorubicin." evidence="17">
    <original>S</original>
    <variation>A</variation>
    <location>
        <position position="605"/>
    </location>
</feature>
<feature type="mutagenesis site" description="Only partially affects protein maturation; impairs leukotriene C4 transport." evidence="13">
    <original>D</original>
    <variation>A</variation>
    <location>
        <position position="792"/>
    </location>
</feature>
<feature type="mutagenesis site" description="Impairs protein maturation and leukotriene C4 transport." evidence="13">
    <original>D</original>
    <variation>L</variation>
    <location>
        <position position="792"/>
    </location>
</feature>
<feature type="mutagenesis site" description="No effect on protein maturation and leukotriene C4 transport." evidence="13">
    <original>D</original>
    <variation>L</variation>
    <location>
        <position position="793"/>
    </location>
</feature>
<feature type="mutagenesis site" description="Slightly impairs leukotriene C4 and estradiol glucuronide transport." evidence="16">
    <original>R</original>
    <variation>D</variation>
    <location>
        <position position="1046"/>
    </location>
</feature>
<feature type="mutagenesis site" description="Impairs leukotriene C4 and estradiol glucuronide transport." evidence="16">
    <original>D</original>
    <variation>R</variation>
    <location>
        <position position="1084"/>
    </location>
</feature>
<feature type="mutagenesis site" description="Decreases resistance to anthracyclines." evidence="11">
    <original>E</original>
    <variation>A</variation>
    <variation>L</variation>
    <variation>N</variation>
    <variation>Q</variation>
    <location>
        <position position="1089"/>
    </location>
</feature>
<feature type="mutagenesis site" description="No effect." evidence="11">
    <original>E</original>
    <variation>D</variation>
    <location>
        <position position="1089"/>
    </location>
</feature>
<feature type="mutagenesis site" description="Abolishes resistance to anthracyclines." evidence="11">
    <original>E</original>
    <variation>K</variation>
    <location>
        <position position="1089"/>
    </location>
</feature>
<feature type="mutagenesis site" description="Slightly impairs leukotriene C4 and estradiol glucuronide transport." evidence="16">
    <original>R</original>
    <variation>E</variation>
    <location>
        <position position="1131"/>
    </location>
</feature>
<feature type="mutagenesis site" description="Strongly reduced transport of leukotriene C4, estradiol glucuronide and of glutathione." evidence="18">
    <original>R</original>
    <variation>E</variation>
    <variation>K</variation>
    <location>
        <position position="1138"/>
    </location>
</feature>
<feature type="mutagenesis site" description="Reduced transport of leukotriene C4 and of glutathione." evidence="18">
    <original>K</original>
    <variation>E</variation>
    <location>
        <position position="1141"/>
    </location>
</feature>
<feature type="mutagenesis site" description="Reduced transport of glutathione." evidence="18">
    <original>K</original>
    <variation>R</variation>
    <location>
        <position position="1141"/>
    </location>
</feature>
<feature type="mutagenesis site" description="Reduced transport of leukotriene C4, estradiol glucuronide and of glutathione." evidence="18">
    <original>R</original>
    <variation>E</variation>
    <variation>K</variation>
    <location>
        <position position="1142"/>
    </location>
</feature>
<feature type="mutagenesis site" description="Impairs estradiol glucuronide transport." evidence="12">
    <original>W</original>
    <variation>A</variation>
    <variation>F</variation>
    <variation>Y</variation>
    <location>
        <position position="1246"/>
    </location>
</feature>
<feature type="mutagenesis site" description="Impairs estradiol glucuronide transport; loss of resistance to alkaloid vincristine, cationic anthracyclines, epipodophyllotoxin VP-16, but not potassium antimony tartrate; partial loss of resistance to sodium arsenite." evidence="12">
    <original>W</original>
    <variation>C</variation>
    <location>
        <position position="1246"/>
    </location>
</feature>
<feature type="mutagenesis site" description="Impairs leukotriene C4 transport." evidence="13">
    <original>K</original>
    <variation>L</variation>
    <location>
        <position position="1333"/>
    </location>
</feature>
<feature type="mutagenesis site" description="Reduced cGAMP export." evidence="23">
    <original>K</original>
    <variation>M</variation>
    <location>
        <position position="1333"/>
    </location>
</feature>
<feature type="mutagenesis site" description="Impairs leukotriene C4 transport." evidence="13">
    <original>DE</original>
    <variation>LL</variation>
    <location>
        <begin position="1454"/>
        <end position="1455"/>
    </location>
</feature>
<feature type="strand" evidence="40">
    <location>
        <begin position="644"/>
        <end position="653"/>
    </location>
</feature>
<feature type="strand" evidence="40">
    <location>
        <begin position="660"/>
        <end position="668"/>
    </location>
</feature>
<feature type="strand" evidence="40">
    <location>
        <begin position="673"/>
        <end position="677"/>
    </location>
</feature>
<feature type="helix" evidence="40">
    <location>
        <begin position="684"/>
        <end position="691"/>
    </location>
</feature>
<feature type="strand" evidence="40">
    <location>
        <begin position="695"/>
        <end position="704"/>
    </location>
</feature>
<feature type="strand" evidence="40">
    <location>
        <begin position="708"/>
        <end position="711"/>
    </location>
</feature>
<feature type="strand" evidence="40">
    <location>
        <begin position="719"/>
        <end position="721"/>
    </location>
</feature>
<feature type="helix" evidence="40">
    <location>
        <begin position="722"/>
        <end position="727"/>
    </location>
</feature>
<feature type="helix" evidence="40">
    <location>
        <begin position="736"/>
        <end position="743"/>
    </location>
</feature>
<feature type="helix" evidence="40">
    <location>
        <begin position="747"/>
        <end position="750"/>
    </location>
</feature>
<feature type="helix" evidence="40">
    <location>
        <begin position="756"/>
        <end position="758"/>
    </location>
</feature>
<feature type="strand" evidence="40">
    <location>
        <begin position="759"/>
        <end position="762"/>
    </location>
</feature>
<feature type="helix" evidence="40">
    <location>
        <begin position="770"/>
        <end position="784"/>
    </location>
</feature>
<feature type="strand" evidence="40">
    <location>
        <begin position="787"/>
        <end position="793"/>
    </location>
</feature>
<feature type="turn" evidence="40">
    <location>
        <begin position="794"/>
        <end position="797"/>
    </location>
</feature>
<feature type="helix" evidence="40">
    <location>
        <begin position="800"/>
        <end position="809"/>
    </location>
</feature>
<feature type="turn" evidence="40">
    <location>
        <begin position="816"/>
        <end position="819"/>
    </location>
</feature>
<feature type="strand" evidence="40">
    <location>
        <begin position="820"/>
        <end position="825"/>
    </location>
</feature>
<feature type="helix" evidence="40">
    <location>
        <begin position="832"/>
        <end position="834"/>
    </location>
</feature>
<feature type="strand" evidence="40">
    <location>
        <begin position="835"/>
        <end position="842"/>
    </location>
</feature>
<feature type="strand" evidence="40">
    <location>
        <begin position="845"/>
        <end position="850"/>
    </location>
</feature>
<feature type="helix" evidence="40">
    <location>
        <begin position="852"/>
        <end position="858"/>
    </location>
</feature>
<feature type="helix" evidence="40">
    <location>
        <begin position="861"/>
        <end position="868"/>
    </location>
</feature>
<accession>P33527</accession>
<accession>A3RJX2</accession>
<accession>C9JPJ4</accession>
<accession>O14819</accession>
<accession>O43333</accession>
<accession>P78419</accession>
<accession>Q59GI9</accession>
<accession>Q9UQ97</accession>
<accession>Q9UQ99</accession>
<accession>Q9UQA0</accession>
<organism>
    <name type="scientific">Homo sapiens</name>
    <name type="common">Human</name>
    <dbReference type="NCBI Taxonomy" id="9606"/>
    <lineage>
        <taxon>Eukaryota</taxon>
        <taxon>Metazoa</taxon>
        <taxon>Chordata</taxon>
        <taxon>Craniata</taxon>
        <taxon>Vertebrata</taxon>
        <taxon>Euteleostomi</taxon>
        <taxon>Mammalia</taxon>
        <taxon>Eutheria</taxon>
        <taxon>Euarchontoglires</taxon>
        <taxon>Primates</taxon>
        <taxon>Haplorrhini</taxon>
        <taxon>Catarrhini</taxon>
        <taxon>Hominidae</taxon>
        <taxon>Homo</taxon>
    </lineage>
</organism>
<keyword id="KW-0002">3D-structure</keyword>
<keyword id="KW-0025">Alternative splicing</keyword>
<keyword id="KW-0067">ATP-binding</keyword>
<keyword id="KW-1003">Cell membrane</keyword>
<keyword id="KW-0209">Deafness</keyword>
<keyword id="KW-0325">Glycoprotein</keyword>
<keyword id="KW-0378">Hydrolase</keyword>
<keyword id="KW-0445">Lipid transport</keyword>
<keyword id="KW-0472">Membrane</keyword>
<keyword id="KW-1010">Non-syndromic deafness</keyword>
<keyword id="KW-0547">Nucleotide-binding</keyword>
<keyword id="KW-0597">Phosphoprotein</keyword>
<keyword id="KW-1267">Proteomics identification</keyword>
<keyword id="KW-1185">Reference proteome</keyword>
<keyword id="KW-0677">Repeat</keyword>
<keyword id="KW-1278">Translocase</keyword>
<keyword id="KW-0812">Transmembrane</keyword>
<keyword id="KW-1133">Transmembrane helix</keyword>
<keyword id="KW-0813">Transport</keyword>
<reference key="1">
    <citation type="journal article" date="1992" name="Science">
        <title>Overexpression of a transporter gene in a multidrug-resistant human lung cancer cell line.</title>
        <authorList>
            <person name="Cole S.P.C."/>
            <person name="Bhardwaj G."/>
            <person name="Gerlach J.H."/>
            <person name="Mackie J.E."/>
            <person name="Grant C.E."/>
            <person name="Almquist K.C."/>
            <person name="Stewart A.J."/>
            <person name="Kurz E.U."/>
            <person name="Duncan A.M.V."/>
            <person name="Deeley R.G."/>
        </authorList>
    </citation>
    <scope>NUCLEOTIDE SEQUENCE [MRNA] (ISOFORM 1)</scope>
    <scope>VARIANT THR-117</scope>
</reference>
<reference key="2">
    <citation type="journal article" date="1993" name="Science">
        <title>Multidrug resistance-associated protein: sequence correction.</title>
        <authorList>
            <person name="Cole S.P.C."/>
            <person name="Deeley R.G."/>
        </authorList>
    </citation>
    <scope>SEQUENCE REVISION</scope>
</reference>
<reference key="3">
    <citation type="journal article" date="1997" name="Genomics">
        <title>Analysis of the intron-exon organization of the human multidrug-resistance protein gene (MRP) and alternative splicing of its mRNA.</title>
        <authorList>
            <person name="Grant C.E."/>
            <person name="Kurz E.U."/>
            <person name="Cole S.P.C."/>
            <person name="Deeley R.G."/>
        </authorList>
    </citation>
    <scope>NUCLEOTIDE SEQUENCE [GENOMIC DNA]</scope>
    <scope>ALTERNATIVE SPLICING</scope>
    <scope>VARIANT THR-117</scope>
</reference>
<reference key="4">
    <citation type="submission" date="2007-02" db="EMBL/GenBank/DDBJ databases">
        <authorList>
            <consortium name="NIEHS SNPs program"/>
        </authorList>
    </citation>
    <scope>NUCLEOTIDE SEQUENCE [GENOMIC DNA]</scope>
    <scope>VARIANTS VAL-671; GLN-723; THR-861; SER-1047 AND ILE-1146</scope>
</reference>
<reference key="5">
    <citation type="journal article" date="2004" name="Nature">
        <title>The sequence and analysis of duplication-rich human chromosome 16.</title>
        <authorList>
            <person name="Martin J."/>
            <person name="Han C."/>
            <person name="Gordon L.A."/>
            <person name="Terry A."/>
            <person name="Prabhakar S."/>
            <person name="She X."/>
            <person name="Xie G."/>
            <person name="Hellsten U."/>
            <person name="Chan Y.M."/>
            <person name="Altherr M."/>
            <person name="Couronne O."/>
            <person name="Aerts A."/>
            <person name="Bajorek E."/>
            <person name="Black S."/>
            <person name="Blumer H."/>
            <person name="Branscomb E."/>
            <person name="Brown N.C."/>
            <person name="Bruno W.J."/>
            <person name="Buckingham J.M."/>
            <person name="Callen D.F."/>
            <person name="Campbell C.S."/>
            <person name="Campbell M.L."/>
            <person name="Campbell E.W."/>
            <person name="Caoile C."/>
            <person name="Challacombe J.F."/>
            <person name="Chasteen L.A."/>
            <person name="Chertkov O."/>
            <person name="Chi H.C."/>
            <person name="Christensen M."/>
            <person name="Clark L.M."/>
            <person name="Cohn J.D."/>
            <person name="Denys M."/>
            <person name="Detter J.C."/>
            <person name="Dickson M."/>
            <person name="Dimitrijevic-Bussod M."/>
            <person name="Escobar J."/>
            <person name="Fawcett J.J."/>
            <person name="Flowers D."/>
            <person name="Fotopulos D."/>
            <person name="Glavina T."/>
            <person name="Gomez M."/>
            <person name="Gonzales E."/>
            <person name="Goodstein D."/>
            <person name="Goodwin L.A."/>
            <person name="Grady D.L."/>
            <person name="Grigoriev I."/>
            <person name="Groza M."/>
            <person name="Hammon N."/>
            <person name="Hawkins T."/>
            <person name="Haydu L."/>
            <person name="Hildebrand C.E."/>
            <person name="Huang W."/>
            <person name="Israni S."/>
            <person name="Jett J."/>
            <person name="Jewett P.B."/>
            <person name="Kadner K."/>
            <person name="Kimball H."/>
            <person name="Kobayashi A."/>
            <person name="Krawczyk M.-C."/>
            <person name="Leyba T."/>
            <person name="Longmire J.L."/>
            <person name="Lopez F."/>
            <person name="Lou Y."/>
            <person name="Lowry S."/>
            <person name="Ludeman T."/>
            <person name="Manohar C.F."/>
            <person name="Mark G.A."/>
            <person name="McMurray K.L."/>
            <person name="Meincke L.J."/>
            <person name="Morgan J."/>
            <person name="Moyzis R.K."/>
            <person name="Mundt M.O."/>
            <person name="Munk A.C."/>
            <person name="Nandkeshwar R.D."/>
            <person name="Pitluck S."/>
            <person name="Pollard M."/>
            <person name="Predki P."/>
            <person name="Parson-Quintana B."/>
            <person name="Ramirez L."/>
            <person name="Rash S."/>
            <person name="Retterer J."/>
            <person name="Ricke D.O."/>
            <person name="Robinson D.L."/>
            <person name="Rodriguez A."/>
            <person name="Salamov A."/>
            <person name="Saunders E.H."/>
            <person name="Scott D."/>
            <person name="Shough T."/>
            <person name="Stallings R.L."/>
            <person name="Stalvey M."/>
            <person name="Sutherland R.D."/>
            <person name="Tapia R."/>
            <person name="Tesmer J.G."/>
            <person name="Thayer N."/>
            <person name="Thompson L.S."/>
            <person name="Tice H."/>
            <person name="Torney D.C."/>
            <person name="Tran-Gyamfi M."/>
            <person name="Tsai M."/>
            <person name="Ulanovsky L.E."/>
            <person name="Ustaszewska A."/>
            <person name="Vo N."/>
            <person name="White P.S."/>
            <person name="Williams A.L."/>
            <person name="Wills P.L."/>
            <person name="Wu J.-R."/>
            <person name="Wu K."/>
            <person name="Yang J."/>
            <person name="DeJong P."/>
            <person name="Bruce D."/>
            <person name="Doggett N.A."/>
            <person name="Deaven L."/>
            <person name="Schmutz J."/>
            <person name="Grimwood J."/>
            <person name="Richardson P."/>
            <person name="Rokhsar D.S."/>
            <person name="Eichler E.E."/>
            <person name="Gilna P."/>
            <person name="Lucas S.M."/>
            <person name="Myers R.M."/>
            <person name="Rubin E.M."/>
            <person name="Pennacchio L.A."/>
        </authorList>
    </citation>
    <scope>NUCLEOTIDE SEQUENCE [LARGE SCALE GENOMIC DNA]</scope>
</reference>
<reference key="6">
    <citation type="submission" date="2005-03" db="EMBL/GenBank/DDBJ databases">
        <authorList>
            <person name="Totoki Y."/>
            <person name="Toyoda A."/>
            <person name="Takeda T."/>
            <person name="Sakaki Y."/>
            <person name="Tanaka A."/>
            <person name="Yokoyama S."/>
            <person name="Ohara O."/>
            <person name="Nagase T."/>
            <person name="Kikuno R.F."/>
        </authorList>
    </citation>
    <scope>NUCLEOTIDE SEQUENCE [LARGE SCALE MRNA] OF 103-1531 (ISOFORM 9)</scope>
    <source>
        <tissue>Brain</tissue>
    </source>
</reference>
<reference key="7">
    <citation type="journal article" date="1999" name="Genomics">
        <title>Genome duplications and other features in 12 Mb of DNA sequence from human chromosome 16p and 16q.</title>
        <authorList>
            <person name="Loftus B.J."/>
            <person name="Kim U.-J."/>
            <person name="Sneddon V.P."/>
            <person name="Kalush F."/>
            <person name="Brandon R."/>
            <person name="Fuhrmann J."/>
            <person name="Mason T."/>
            <person name="Crosby M.L."/>
            <person name="Barnstead M."/>
            <person name="Cronin L."/>
            <person name="Mays A.D."/>
            <person name="Cao Y."/>
            <person name="Xu R.X."/>
            <person name="Kang H.-L."/>
            <person name="Mitchell S."/>
            <person name="Eichler E.E."/>
            <person name="Harris P.C."/>
            <person name="Venter J.C."/>
            <person name="Adams M.D."/>
        </authorList>
    </citation>
    <scope>NUCLEOTIDE SEQUENCE [LARGE SCALE GENOMIC DNA] OF 516-1531</scope>
</reference>
<reference key="8">
    <citation type="journal article" date="1994" name="J. Biol. Chem.">
        <title>The MRP gene encodes an ATP-dependent export pump for leukotriene C4 and structurally related conjugates.</title>
        <authorList>
            <person name="Leier I."/>
            <person name="Jedlitschky G."/>
            <person name="Buchholz U."/>
            <person name="Cole S.P."/>
            <person name="Deeley R.G."/>
            <person name="Keppler D."/>
        </authorList>
    </citation>
    <scope>TRANSPORTER ACTIVITY</scope>
    <scope>ACTIVITY REGULATION</scope>
    <scope>BIOPHYSICOCHEMICAL PROPERTIES</scope>
    <scope>FUNCTION</scope>
</reference>
<reference key="9">
    <citation type="journal article" date="1997" name="FEBS Lett.">
        <title>Transport of glutathione prostaglandin A conjugates by the multidrug resistance protein 1.</title>
        <authorList>
            <person name="Evers R."/>
            <person name="Cnubben N.H."/>
            <person name="Wijnholds J."/>
            <person name="van Deemter L."/>
            <person name="van Bladeren P.J."/>
            <person name="Borst P."/>
        </authorList>
    </citation>
    <scope>FUNCTION</scope>
    <scope>TRANSPORTER ACTIVITY</scope>
    <scope>SUBCELLULAR LOCATION</scope>
</reference>
<reference key="10">
    <citation type="journal article" date="1997" name="J. Biol. Chem.">
        <title>Membrane topology of the multidrug resistance protein (MRP). A study of glycosylation-site mutants reveals an extracytosolic NH2 terminus.</title>
        <authorList>
            <person name="Hipfner D.R."/>
            <person name="Almquist K.C."/>
            <person name="Leslie E.M."/>
            <person name="Gerlach J.H."/>
            <person name="Grant C.E."/>
            <person name="Deeley R.G."/>
            <person name="Cole S.P.C."/>
        </authorList>
    </citation>
    <scope>TOPOLOGY</scope>
    <scope>GLYCOSYLATION AT ASN-19; ASN-23 AND ASN-1006</scope>
</reference>
<reference key="11">
    <citation type="journal article" date="1997" name="J. Biol. Chem.">
        <title>Topology mapping of the amino-terminal half of multidrug resistance-associated protein by epitope insertion and immunofluorescence.</title>
        <authorList>
            <person name="Kast C."/>
            <person name="Gros P."/>
        </authorList>
    </citation>
    <scope>TOPOLOGY</scope>
</reference>
<reference key="12">
    <citation type="journal article" date="1997" name="Mol. Pharmacol.">
        <title>Pharmacological characterization of the murine and human orthologs of multidrug-resistance protein in transfected human embryonic kidney cells.</title>
        <authorList>
            <person name="Stride B.D."/>
            <person name="Grant C.E."/>
            <person name="Loe D.W."/>
            <person name="Hipfner D.R."/>
            <person name="Cole S.P.C."/>
            <person name="Deeley R.G."/>
        </authorList>
    </citation>
    <scope>CATALYTIC ACTIVITY</scope>
    <scope>FUNCTION</scope>
    <scope>BIOPHYSICOCHEMICAL PROPERTIES</scope>
</reference>
<reference key="13">
    <citation type="journal article" date="1998" name="Biochemistry">
        <title>Epitope insertion favors a six transmembrane domain model for the carboxy-terminal portion of the multidrug resistance-associated protein.</title>
        <authorList>
            <person name="Kast C."/>
            <person name="Gros P."/>
        </authorList>
    </citation>
    <scope>TOPOLOGY</scope>
</reference>
<reference key="14">
    <citation type="journal article" date="1999" name="J. Lipid Res.">
        <title>Characterization of a leukotriene C4 export mechanism in human platelets: possible involvement of multidrug resistance-associated protein 1.</title>
        <authorList>
            <person name="Sjoelinder M."/>
            <person name="Tornhamre S."/>
            <person name="Claesson H.-E."/>
            <person name="Hydman J."/>
            <person name="Lindgren J.A."/>
        </authorList>
    </citation>
    <scope>FUNCTION</scope>
</reference>
<reference key="15">
    <citation type="journal article" date="2000" name="Cell">
        <title>The leukotriene C(4) transporter MRP1 regulates CCL19 (MIP-3beta, ELC)-dependent mobilization of dendritic cells to lymph nodes.</title>
        <authorList>
            <person name="Robbiani D.F."/>
            <person name="Finch R.A."/>
            <person name="Jaeger D."/>
            <person name="Muller W.A."/>
            <person name="Sartorelli A.C."/>
            <person name="Randolph G.J."/>
        </authorList>
    </citation>
    <scope>FUNCTION</scope>
</reference>
<reference key="16">
    <citation type="journal article" date="2001" name="Arch. Biochem. Biophys.">
        <title>Mutations of the Walker B motif in the first nucleotide binding domain of multidrug resistance protein MRP1 prevent conformational maturation.</title>
        <authorList>
            <person name="Cui L."/>
            <person name="Hou Y.-X."/>
            <person name="Riordan J.R."/>
            <person name="Chang X.-B."/>
        </authorList>
    </citation>
    <scope>MUTAGENESIS OF ASP-792; ASP-793; LYS-1333 AND 1454-ASP-GLU-1455</scope>
</reference>
<reference key="17">
    <citation type="journal article" date="2001" name="J. Biol. Chem.">
        <title>Mutation of a single conserved tryptophan in multidrug resistance protein 1 (MRP1/ABCC1) results in loss of drug resistance and selective loss of organic anion transport.</title>
        <authorList>
            <person name="Ito K."/>
            <person name="Olsen S.L."/>
            <person name="Qiu W."/>
            <person name="Deeley R.G."/>
            <person name="Cole S.P.C."/>
        </authorList>
    </citation>
    <scope>MUTAGENESIS OF TRP-1246</scope>
</reference>
<reference key="18">
    <citation type="journal article" date="2001" name="J. Biol. Chem.">
        <title>Identification of an amino acid residue in multidrug resistance protein 1 critical for conferring resistance to anthracyclines.</title>
        <authorList>
            <person name="Zhang D.-W."/>
            <person name="Cole S.P.C."/>
            <person name="Deeley R.G."/>
        </authorList>
    </citation>
    <scope>MUTAGENESIS OF GLU-1089</scope>
</reference>
<reference key="19">
    <citation type="journal article" date="2004" name="J. Biol. Chem.">
        <title>Mutational analysis of ionizable residues proximal to the cytoplasmic interface of membrane spanning domain 3 of the multidrug resistance protein, MRP1 (ABCC1): glutamate 1204 is important for both the expression and catalytic activity of the transporter.</title>
        <authorList>
            <person name="Situ D."/>
            <person name="Haimeur A."/>
            <person name="Conseil G."/>
            <person name="Sparks K.E."/>
            <person name="Zhang D.-W."/>
            <person name="Deeley R.G."/>
            <person name="Cole S.P.C."/>
        </authorList>
    </citation>
    <scope>MUTAGENESIS OF ARG-1046; ASP-1084 AND ARG-1131</scope>
</reference>
<reference key="20">
    <citation type="journal article" date="2004" name="Biochemistry">
        <title>Transmembrane helix 11 of multidrug resistance protein 1 (MRP1/ABCC1): identification of polar amino acids important for substrate specificity and binding of ATP at nucleotide binding domain 1.</title>
        <authorList>
            <person name="Zhang D.-W."/>
            <person name="Nunoya K."/>
            <person name="Vasa M."/>
            <person name="Gu H.-M."/>
            <person name="Theis A."/>
            <person name="Cole S.P.C."/>
            <person name="Deeley R.G."/>
        </authorList>
    </citation>
    <scope>MUTAGENESIS OF GLN-580; THR-581; SER-585; ASN-597; SER-604 AND SER-605</scope>
</reference>
<reference key="21">
    <citation type="journal article" date="2006" name="Cell">
        <title>Global, in vivo, and site-specific phosphorylation dynamics in signaling networks.</title>
        <authorList>
            <person name="Olsen J.V."/>
            <person name="Blagoev B."/>
            <person name="Gnad F."/>
            <person name="Macek B."/>
            <person name="Kumar C."/>
            <person name="Mortensen P."/>
            <person name="Mann M."/>
        </authorList>
    </citation>
    <scope>IDENTIFICATION BY MASS SPECTROMETRY [LARGE SCALE ANALYSIS]</scope>
    <source>
        <tissue>Cervix carcinoma</tissue>
    </source>
</reference>
<reference key="22">
    <citation type="journal article" date="2006" name="J. Biol. Chem.">
        <title>Functional importance of three basic residues clustered at the cytosolic interface of transmembrane helix 15 in the multidrug and organic anion transporter MRP1 (ABCC1).</title>
        <authorList>
            <person name="Conseil G."/>
            <person name="Deeley R.G."/>
            <person name="Cole S.P."/>
        </authorList>
    </citation>
    <scope>FUNCTION</scope>
    <scope>MUTAGENESIS OF ARG-1138; LYS-1141 AND ARG-1142</scope>
    <scope>SUBCELLULAR LOCATION</scope>
</reference>
<reference key="23">
    <citation type="journal article" date="2006" name="Proc. Natl. Acad. Sci. U.S.A.">
        <title>Role of ABCC1 in export of sphingosine-1-phosphate from mast cells.</title>
        <authorList>
            <person name="Mitra P."/>
            <person name="Oskeritzian C.A."/>
            <person name="Payne S.G."/>
            <person name="Beaven M.A."/>
            <person name="Milstien S."/>
            <person name="Spiegel S."/>
        </authorList>
    </citation>
    <scope>CATALYTIC ACTIVITY</scope>
    <scope>ACTIVITY REGULATION</scope>
    <scope>FUNCTION</scope>
</reference>
<reference key="24">
    <citation type="journal article" date="2008" name="Mol. Cell">
        <title>Kinase-selective enrichment enables quantitative phosphoproteomics of the kinome across the cell cycle.</title>
        <authorList>
            <person name="Daub H."/>
            <person name="Olsen J.V."/>
            <person name="Bairlein M."/>
            <person name="Gnad F."/>
            <person name="Oppermann F.S."/>
            <person name="Korner R."/>
            <person name="Greff Z."/>
            <person name="Keri G."/>
            <person name="Stemmann O."/>
            <person name="Mann M."/>
        </authorList>
    </citation>
    <scope>IDENTIFICATION BY MASS SPECTROMETRY [LARGE SCALE ANALYSIS]</scope>
    <source>
        <tissue>Cervix carcinoma</tissue>
    </source>
</reference>
<reference key="25">
    <citation type="journal article" date="2009" name="Anal. Chem.">
        <title>Lys-N and trypsin cover complementary parts of the phosphoproteome in a refined SCX-based approach.</title>
        <authorList>
            <person name="Gauci S."/>
            <person name="Helbig A.O."/>
            <person name="Slijper M."/>
            <person name="Krijgsveld J."/>
            <person name="Heck A.J."/>
            <person name="Mohammed S."/>
        </authorList>
    </citation>
    <scope>IDENTIFICATION BY MASS SPECTROMETRY [LARGE SCALE ANALYSIS]</scope>
</reference>
<reference key="26">
    <citation type="journal article" date="2009" name="Sci. Signal.">
        <title>Quantitative phosphoproteomic analysis of T cell receptor signaling reveals system-wide modulation of protein-protein interactions.</title>
        <authorList>
            <person name="Mayya V."/>
            <person name="Lundgren D.H."/>
            <person name="Hwang S.-I."/>
            <person name="Rezaul K."/>
            <person name="Wu L."/>
            <person name="Eng J.K."/>
            <person name="Rodionov V."/>
            <person name="Han D.K."/>
        </authorList>
    </citation>
    <scope>PHOSPHORYLATION [LARGE SCALE ANALYSIS] AT SER-915</scope>
    <scope>IDENTIFICATION BY MASS SPECTROMETRY [LARGE SCALE ANALYSIS]</scope>
    <source>
        <tissue>Leukemic T-cell</tissue>
    </source>
</reference>
<reference key="27">
    <citation type="journal article" date="2010" name="Sci. Signal.">
        <title>Quantitative phosphoproteomics reveals widespread full phosphorylation site occupancy during mitosis.</title>
        <authorList>
            <person name="Olsen J.V."/>
            <person name="Vermeulen M."/>
            <person name="Santamaria A."/>
            <person name="Kumar C."/>
            <person name="Miller M.L."/>
            <person name="Jensen L.J."/>
            <person name="Gnad F."/>
            <person name="Cox J."/>
            <person name="Jensen T.S."/>
            <person name="Nigg E.A."/>
            <person name="Brunak S."/>
            <person name="Mann M."/>
        </authorList>
    </citation>
    <scope>PHOSPHORYLATION [LARGE SCALE ANALYSIS] AT SER-905 AND SER-930</scope>
    <scope>IDENTIFICATION BY MASS SPECTROMETRY [LARGE SCALE ANALYSIS]</scope>
    <source>
        <tissue>Cervix carcinoma</tissue>
    </source>
</reference>
<reference key="28">
    <citation type="journal article" date="2011" name="BMC Syst. Biol.">
        <title>Initial characterization of the human central proteome.</title>
        <authorList>
            <person name="Burkard T.R."/>
            <person name="Planyavsky M."/>
            <person name="Kaupe I."/>
            <person name="Breitwieser F.P."/>
            <person name="Buerckstuemmer T."/>
            <person name="Bennett K.L."/>
            <person name="Superti-Furga G."/>
            <person name="Colinge J."/>
        </authorList>
    </citation>
    <scope>IDENTIFICATION BY MASS SPECTROMETRY [LARGE SCALE ANALYSIS]</scope>
</reference>
<reference key="29">
    <citation type="journal article" date="2011" name="Sci. Signal.">
        <title>System-wide temporal characterization of the proteome and phosphoproteome of human embryonic stem cell differentiation.</title>
        <authorList>
            <person name="Rigbolt K.T."/>
            <person name="Prokhorova T.A."/>
            <person name="Akimov V."/>
            <person name="Henningsen J."/>
            <person name="Johansen P.T."/>
            <person name="Kratchmarova I."/>
            <person name="Kassem M."/>
            <person name="Mann M."/>
            <person name="Olsen J.V."/>
            <person name="Blagoev B."/>
        </authorList>
    </citation>
    <scope>PHOSPHORYLATION [LARGE SCALE ANALYSIS] AT SER-930</scope>
    <scope>IDENTIFICATION BY MASS SPECTROMETRY [LARGE SCALE ANALYSIS]</scope>
</reference>
<reference key="30">
    <citation type="journal article" date="2013" name="Science">
        <title>Latency-associated degradation of the MRP1 drug transporter during latent human cytomegalovirus infection.</title>
        <authorList>
            <person name="Weekes M.P."/>
            <person name="Tan S.Y."/>
            <person name="Poole E."/>
            <person name="Talbot S."/>
            <person name="Antrobus R."/>
            <person name="Smith D.L."/>
            <person name="Montag C."/>
            <person name="Gygi S.P."/>
            <person name="Sinclair J.H."/>
            <person name="Lehner P.J."/>
        </authorList>
    </citation>
    <scope>INTERACTION WITH HUMAN CYTOMEGALOVIRUS PROTEIN UL138 (MICROBIAL INFECTION)</scope>
</reference>
<reference key="31">
    <citation type="journal article" date="2013" name="J. Proteome Res.">
        <title>Toward a comprehensive characterization of a human cancer cell phosphoproteome.</title>
        <authorList>
            <person name="Zhou H."/>
            <person name="Di Palma S."/>
            <person name="Preisinger C."/>
            <person name="Peng M."/>
            <person name="Polat A.N."/>
            <person name="Heck A.J."/>
            <person name="Mohammed S."/>
        </authorList>
    </citation>
    <scope>PHOSPHORYLATION [LARGE SCALE ANALYSIS] AT SER-915</scope>
    <scope>IDENTIFICATION BY MASS SPECTROMETRY [LARGE SCALE ANALYSIS]</scope>
    <source>
        <tissue>Cervix carcinoma</tissue>
        <tissue>Erythroleukemia</tissue>
    </source>
</reference>
<reference key="32">
    <citation type="journal article" date="2014" name="J. Proteomics">
        <title>An enzyme assisted RP-RPLC approach for in-depth analysis of human liver phosphoproteome.</title>
        <authorList>
            <person name="Bian Y."/>
            <person name="Song C."/>
            <person name="Cheng K."/>
            <person name="Dong M."/>
            <person name="Wang F."/>
            <person name="Huang J."/>
            <person name="Sun D."/>
            <person name="Wang L."/>
            <person name="Ye M."/>
            <person name="Zou H."/>
        </authorList>
    </citation>
    <scope>IDENTIFICATION BY MASS SPECTROMETRY [LARGE SCALE ANALYSIS]</scope>
    <source>
        <tissue>Liver</tissue>
    </source>
</reference>
<reference key="33">
    <citation type="journal article" date="2022" name="Immunity">
        <title>ABCC1 transporter exports the immunostimulatory cyclic dinucleotide cGAMP.</title>
        <authorList>
            <person name="Maltbaek J.H."/>
            <person name="Cambier S."/>
            <person name="Snyder J.M."/>
            <person name="Stetson D.B."/>
        </authorList>
    </citation>
    <scope>FUNCTION</scope>
    <scope>TRANSPORTER ACTIVITY</scope>
    <scope>MUTAGENESIS OF LYS-1333</scope>
</reference>
<reference key="34">
    <citation type="journal article" date="2006" name="J. Mol. Biol.">
        <title>Structure of the human multidrug resistance protein 1 nucleotide binding domain 1 bound to Mg2+/ATP reveals a non-productive catalytic site.</title>
        <authorList>
            <person name="Ramaen O."/>
            <person name="Leulliot N."/>
            <person name="Sizun C."/>
            <person name="Ulryck N."/>
            <person name="Pamlard O."/>
            <person name="Lallemand J.-Y."/>
            <person name="Tilbeurgh H."/>
            <person name="Jacquet E."/>
        </authorList>
    </citation>
    <scope>X-RAY CRYSTALLOGRAPHY (1.5 ANGSTROMS) OF 642-871 IN COMPLEX WITH MG-ATP</scope>
</reference>
<reference key="35">
    <citation type="journal article" date="2000" name="Nat. Genet.">
        <title>Mutations in a gene encoding an ABC transporter cause pseudoxanthoma elasticum.</title>
        <authorList>
            <person name="Le Saux O."/>
            <person name="Urban Z."/>
            <person name="Tschuch C."/>
            <person name="Csiszar K."/>
            <person name="Bacchelli B."/>
            <person name="Quaglino D."/>
            <person name="Pasquali-Ronchetti I."/>
            <person name="Pope F.M."/>
            <person name="Richards A."/>
            <person name="Terry S."/>
            <person name="Bercovitch L."/>
            <person name="de Paepe A."/>
            <person name="Boyd C.D."/>
        </authorList>
    </citation>
    <scope>VARIANTS GLN-633 AND VAL-671</scope>
</reference>
<reference key="36">
    <citation type="journal article" date="2000" name="Proc. Natl. Acad. Sci. U.S.A.">
        <title>Pseudoxanthoma elasticum: mutations in the MRP6 gene encoding a transmembrane ATP-binding cassette (ABC) transporter.</title>
        <authorList>
            <person name="Ringpfeil F."/>
            <person name="Lebwohl M.G."/>
            <person name="Christiano A.M."/>
            <person name="Uitto J."/>
        </authorList>
    </citation>
    <scope>VARIANT VAL-671</scope>
</reference>
<reference key="37">
    <citation type="journal article" date="2001" name="J. Hum. Genet.">
        <title>Identification of human multidrug resistance protein 1 (MRP1) mutations and characterization of a G671V substitution.</title>
        <authorList>
            <person name="Conrad S."/>
            <person name="Kauffmann H.-M."/>
            <person name="Ito K."/>
            <person name="Deeley R.G."/>
            <person name="Cole S.P.C."/>
            <person name="Schrenk D."/>
        </authorList>
    </citation>
    <scope>VARIANT SER-433</scope>
    <scope>CHARACTERIZATION OF VARIANT VAL-671</scope>
</reference>
<reference key="38">
    <citation type="journal article" date="2001" name="Hum. Mutat.">
        <title>Identification of novel polymorphisms in the pM5 and MRP1 (ABCC1) genes at locus 16p13.1 and exclusion of both genes as responsible for pseudoxanthoma elasticum.</title>
        <authorList>
            <person name="Perdu J."/>
            <person name="Germain D.P."/>
        </authorList>
    </citation>
    <scope>VARIANTS THR-117 AND LEU-1512</scope>
</reference>
<reference key="39">
    <citation type="journal article" date="2001" name="Pharmacogenetics">
        <title>Polymorphism of the ABC transporter genes, MDR1, MRP1 and MRP2/cMOAT, in healthy Japanese subjects.</title>
        <authorList>
            <person name="Ito S."/>
            <person name="Ieiri I."/>
            <person name="Tanabe M."/>
            <person name="Suzuki A."/>
            <person name="Higuchi S."/>
            <person name="Otsubo K."/>
        </authorList>
    </citation>
    <scope>VARIANTS SER-43; ILE-73; GLN-723 AND GLN-1058</scope>
</reference>
<reference key="40">
    <citation type="journal article" date="2008" name="Nature">
        <title>DNA sequencing of a cytogenetically normal acute myeloid leukaemia genome.</title>
        <authorList>
            <person name="Ley T.J."/>
            <person name="Mardis E.R."/>
            <person name="Ding L."/>
            <person name="Fulton B."/>
            <person name="McLellan M.D."/>
            <person name="Chen K."/>
            <person name="Dooling D."/>
            <person name="Dunford-Shore B.H."/>
            <person name="McGrath S."/>
            <person name="Hickenbotham M."/>
            <person name="Cook L."/>
            <person name="Abbott R."/>
            <person name="Larson D.E."/>
            <person name="Koboldt D.C."/>
            <person name="Pohl C."/>
            <person name="Smith S."/>
            <person name="Hawkins A."/>
            <person name="Abbott S."/>
            <person name="Locke D."/>
            <person name="Hillier L.W."/>
            <person name="Miner T."/>
            <person name="Fulton L."/>
            <person name="Magrini V."/>
            <person name="Wylie T."/>
            <person name="Glasscock J."/>
            <person name="Conyers J."/>
            <person name="Sander N."/>
            <person name="Shi X."/>
            <person name="Osborne J.R."/>
            <person name="Minx P."/>
            <person name="Gordon D."/>
            <person name="Chinwalla A."/>
            <person name="Zhao Y."/>
            <person name="Ries R.E."/>
            <person name="Payton J.E."/>
            <person name="Westervelt P."/>
            <person name="Tomasson M.H."/>
            <person name="Watson M."/>
            <person name="Baty J."/>
            <person name="Ivanovich J."/>
            <person name="Heath S."/>
            <person name="Shannon W.D."/>
            <person name="Nagarajan R."/>
            <person name="Walter M.J."/>
            <person name="Link D.C."/>
            <person name="Graubert T.A."/>
            <person name="DiPersio J.F."/>
            <person name="Wilson R.K."/>
        </authorList>
    </citation>
    <scope>VARIANT [LARGE SCALE ANALYSIS] SER-433</scope>
</reference>
<reference key="41">
    <citation type="journal article" date="2019" name="Genet. Med.">
        <title>Extrusion pump ABCC1 was first linked with nonsyndromic hearing loss in humans by stepwise genetic analysis.</title>
        <authorList>
            <person name="Li M."/>
            <person name="Mei L."/>
            <person name="He C."/>
            <person name="Chen H."/>
            <person name="Cai X."/>
            <person name="Liu Y."/>
            <person name="Tian R."/>
            <person name="Tian Q."/>
            <person name="Song J."/>
            <person name="Jiang L."/>
            <person name="Liu C."/>
            <person name="Wu H."/>
            <person name="Li T."/>
            <person name="Liu J."/>
            <person name="Li X."/>
            <person name="Yi Y."/>
            <person name="Yan D."/>
            <person name="Blanton S.H."/>
            <person name="Hu Z."/>
            <person name="Liu X."/>
            <person name="Li J."/>
            <person name="Ling J."/>
            <person name="Feng Y."/>
        </authorList>
    </citation>
    <scope>INVOLVEMENT IN DFNA77</scope>
    <scope>VARIANTS DFNA77 ASP-231; VAL-296 AND SER-590</scope>
    <scope>SUBCELLULAR LOCATION</scope>
    <scope>CHARACTERIZATION OF VARIANT DFNA77 SER-590</scope>
    <scope>VARIANTS CYS-242; ILE-886; ARG-1007 AND THR-1086</scope>
</reference>
<gene>
    <name evidence="35" type="primary">ABCC1</name>
    <name type="synonym">MRP</name>
    <name type="synonym">MRP1</name>
</gene>
<comment type="function">
    <text evidence="1 5 8 18 19 23 24 25 28">Mediates export of organic anions and drugs from the cytoplasm (PubMed:10064732, PubMed:11114332, PubMed:16230346, PubMed:7961706, PubMed:9281595). Mediates ATP-dependent transport of glutathione and glutathione conjugates, leukotriene C4, estradiol-17-beta-o-glucuronide, methotrexate, antiviral drugs and other xenobiotics (PubMed:10064732, PubMed:11114332, PubMed:16230346, PubMed:7961706, PubMed:9281595). Confers resistance to anticancer drugs by decreasing accumulation of drug in cells, and by mediating ATP- and GSH-dependent drug export (PubMed:9281595). Hydrolyzes ATP with low efficiency (PubMed:16230346). Catalyzes the export of sphingosine 1-phosphate from mast cells independently of their degranulation (PubMed:17050692). Participates in inflammatory response by allowing export of leukotriene C4 from leukotriene C4-synthesizing cells (By similarity). Mediates ATP-dependent, GSH-independent cyclic GMP-AMP (cGAMP) export (PubMed:36070769). Thus, by limiting intracellular cGAMP concentrations negatively regulates the cGAS-STING pathway (PubMed:36070769). Exports S-geranylgeranyl-glutathione (GGG) in lymphoid cells and stromal compartments of lymphoid organs. ABCC1 (via extracellular transport) with GGT5 (via GGG catabolism) establish GGG gradients within lymphoid tissues to position P2RY8-positive lymphocytes at germinal centers in lymphoid follicles and restrict their chemotactic transmigration from blood vessels to the bone marrow parenchyma (By similarity). Mediates basolateral export of GSH-conjugated R- and S-prostaglandin A2 diastereomers in polarized epithelial cells (PubMed:9426231).</text>
</comment>
<comment type="catalytic activity">
    <reaction evidence="25">
        <text>ATP + H2O + xenobioticSide 1 = ADP + phosphate + xenobioticSide 2.</text>
        <dbReference type="EC" id="7.6.2.2"/>
    </reaction>
</comment>
<comment type="catalytic activity">
    <reaction evidence="1">
        <text>an S-substituted glutathione(in) + ATP + H2O = an S-substituted glutathione(out) + ADP + phosphate + H(+)</text>
        <dbReference type="Rhea" id="RHEA:19121"/>
        <dbReference type="ChEBI" id="CHEBI:15377"/>
        <dbReference type="ChEBI" id="CHEBI:15378"/>
        <dbReference type="ChEBI" id="CHEBI:30616"/>
        <dbReference type="ChEBI" id="CHEBI:43474"/>
        <dbReference type="ChEBI" id="CHEBI:90779"/>
        <dbReference type="ChEBI" id="CHEBI:456216"/>
        <dbReference type="EC" id="7.6.2.3"/>
    </reaction>
</comment>
<comment type="catalytic activity">
    <reaction evidence="19">
        <text>sphing-4-enine 1-phosphate(in) + ATP + H2O = sphing-4-enine 1-phosphate(out) + ADP + phosphate + H(+)</text>
        <dbReference type="Rhea" id="RHEA:38951"/>
        <dbReference type="ChEBI" id="CHEBI:15377"/>
        <dbReference type="ChEBI" id="CHEBI:15378"/>
        <dbReference type="ChEBI" id="CHEBI:30616"/>
        <dbReference type="ChEBI" id="CHEBI:43474"/>
        <dbReference type="ChEBI" id="CHEBI:60119"/>
        <dbReference type="ChEBI" id="CHEBI:456216"/>
    </reaction>
    <physiologicalReaction direction="left-to-right" evidence="32">
        <dbReference type="Rhea" id="RHEA:38952"/>
    </physiologicalReaction>
</comment>
<comment type="catalytic activity">
    <reaction evidence="24 25">
        <text>leukotriene C4(in) + ATP + H2O = leukotriene C4(out) + ADP + phosphate + H(+)</text>
        <dbReference type="Rhea" id="RHEA:38963"/>
        <dbReference type="ChEBI" id="CHEBI:15377"/>
        <dbReference type="ChEBI" id="CHEBI:15378"/>
        <dbReference type="ChEBI" id="CHEBI:30616"/>
        <dbReference type="ChEBI" id="CHEBI:43474"/>
        <dbReference type="ChEBI" id="CHEBI:57973"/>
        <dbReference type="ChEBI" id="CHEBI:456216"/>
    </reaction>
    <physiologicalReaction direction="left-to-right" evidence="24">
        <dbReference type="Rhea" id="RHEA:38964"/>
    </physiologicalReaction>
</comment>
<comment type="catalytic activity">
    <reaction evidence="25">
        <text>17beta-estradiol 17-O-(beta-D-glucuronate)(in) + ATP + H2O = 17beta-estradiol 17-O-(beta-D-glucuronate)(out) + ADP + phosphate + H(+)</text>
        <dbReference type="Rhea" id="RHEA:60128"/>
        <dbReference type="ChEBI" id="CHEBI:15377"/>
        <dbReference type="ChEBI" id="CHEBI:15378"/>
        <dbReference type="ChEBI" id="CHEBI:30616"/>
        <dbReference type="ChEBI" id="CHEBI:43474"/>
        <dbReference type="ChEBI" id="CHEBI:82961"/>
        <dbReference type="ChEBI" id="CHEBI:456216"/>
    </reaction>
    <physiologicalReaction direction="left-to-right" evidence="25">
        <dbReference type="Rhea" id="RHEA:60129"/>
    </physiologicalReaction>
</comment>
<comment type="catalytic activity">
    <reaction evidence="25">
        <text>daunorubicin(in) + ATP + H2O = daunorubicin(out) + ADP + phosphate + H(+)</text>
        <dbReference type="Rhea" id="RHEA:33147"/>
        <dbReference type="ChEBI" id="CHEBI:15377"/>
        <dbReference type="ChEBI" id="CHEBI:15378"/>
        <dbReference type="ChEBI" id="CHEBI:30616"/>
        <dbReference type="ChEBI" id="CHEBI:43474"/>
        <dbReference type="ChEBI" id="CHEBI:64677"/>
        <dbReference type="ChEBI" id="CHEBI:456216"/>
    </reaction>
    <physiologicalReaction direction="left-to-right" evidence="33">
        <dbReference type="Rhea" id="RHEA:33148"/>
    </physiologicalReaction>
</comment>
<comment type="catalytic activity">
    <reaction evidence="25">
        <text>vincristine(in) + ATP + H2O = vincristine(out) + ADP + phosphate + H(+)</text>
        <dbReference type="Rhea" id="RHEA:60160"/>
        <dbReference type="ChEBI" id="CHEBI:15377"/>
        <dbReference type="ChEBI" id="CHEBI:15378"/>
        <dbReference type="ChEBI" id="CHEBI:30616"/>
        <dbReference type="ChEBI" id="CHEBI:43474"/>
        <dbReference type="ChEBI" id="CHEBI:143658"/>
        <dbReference type="ChEBI" id="CHEBI:456216"/>
    </reaction>
    <physiologicalReaction direction="left-to-right" evidence="25">
        <dbReference type="Rhea" id="RHEA:60161"/>
    </physiologicalReaction>
</comment>
<comment type="catalytic activity">
    <reaction evidence="5">
        <text>2',3'-cGAMP(in) + ATP + H2O = 2',3'-cGAMP(out) + ADP + phosphate + H(+)</text>
        <dbReference type="Rhea" id="RHEA:74887"/>
        <dbReference type="ChEBI" id="CHEBI:15377"/>
        <dbReference type="ChEBI" id="CHEBI:15378"/>
        <dbReference type="ChEBI" id="CHEBI:30616"/>
        <dbReference type="ChEBI" id="CHEBI:43474"/>
        <dbReference type="ChEBI" id="CHEBI:143093"/>
        <dbReference type="ChEBI" id="CHEBI:456216"/>
    </reaction>
</comment>
<comment type="catalytic activity">
    <reaction evidence="1">
        <text>S-[(2E,6E,10E)-geranylgeranyl]-L-glutathione(in) + ATP + H2O = S-[(2E,6E,10E)-geranylgeranyl]-L-glutathione(out) + ADP + phosphate + H(+)</text>
        <dbReference type="Rhea" id="RHEA:81611"/>
        <dbReference type="ChEBI" id="CHEBI:15377"/>
        <dbReference type="ChEBI" id="CHEBI:15378"/>
        <dbReference type="ChEBI" id="CHEBI:30616"/>
        <dbReference type="ChEBI" id="CHEBI:43474"/>
        <dbReference type="ChEBI" id="CHEBI:156326"/>
        <dbReference type="ChEBI" id="CHEBI:456216"/>
    </reaction>
    <physiologicalReaction direction="left-to-right" evidence="1">
        <dbReference type="Rhea" id="RHEA:81612"/>
    </physiologicalReaction>
</comment>
<comment type="catalytic activity">
    <reaction evidence="28">
        <text>prostaglandin A2-S-(R)-glutathione(in) + ATP + H2O = prostaglandin A2-S-(R)-glutathione(out) + ADP + phosphate + H(+)</text>
        <dbReference type="Rhea" id="RHEA:81695"/>
        <dbReference type="ChEBI" id="CHEBI:15377"/>
        <dbReference type="ChEBI" id="CHEBI:15378"/>
        <dbReference type="ChEBI" id="CHEBI:30616"/>
        <dbReference type="ChEBI" id="CHEBI:43474"/>
        <dbReference type="ChEBI" id="CHEBI:133768"/>
        <dbReference type="ChEBI" id="CHEBI:456216"/>
    </reaction>
    <physiologicalReaction direction="left-to-right" evidence="34">
        <dbReference type="Rhea" id="RHEA:81696"/>
    </physiologicalReaction>
</comment>
<comment type="catalytic activity">
    <reaction evidence="28">
        <text>prostaglandin A2-S-(S)-glutathione(in) + ATP + H2O = prostaglandin A2-S-(S)-glutathione(out) + ADP + phosphate + H(+)</text>
        <dbReference type="Rhea" id="RHEA:81699"/>
        <dbReference type="ChEBI" id="CHEBI:15377"/>
        <dbReference type="ChEBI" id="CHEBI:15378"/>
        <dbReference type="ChEBI" id="CHEBI:30616"/>
        <dbReference type="ChEBI" id="CHEBI:43474"/>
        <dbReference type="ChEBI" id="CHEBI:133769"/>
        <dbReference type="ChEBI" id="CHEBI:456216"/>
    </reaction>
    <physiologicalReaction direction="left-to-right" evidence="34">
        <dbReference type="Rhea" id="RHEA:81700"/>
    </physiologicalReaction>
</comment>
<comment type="activity regulation">
    <text evidence="19 24">MK 571 inhibits sphingosine 1-phosphate and leukotriene C4 export.</text>
</comment>
<comment type="biophysicochemical properties">
    <kinetics>
        <KM evidence="24">97 nM for leukotriene C4</KM>
        <KM evidence="24">19 uM for ATP</KM>
        <KM evidence="25">98 nM for leukotriene C4</KM>
        <KM evidence="25">4.8 uM for 17beta-estradiol 17-glucosiduronic acid</KM>
        <Vmax evidence="24">100.0 pmol/min/mg enzyme for leukotriene C4 transport</Vmax>
        <Vmax evidence="25">920.0 pmol/min/mg enzyme for leukotriene C4 transport</Vmax>
        <Vmax evidence="25">1.4 nmol/min/mg enzyme for 17beta-estradiol 17-glucosiduronic acid transport</Vmax>
    </kinetics>
</comment>
<comment type="subunit">
    <text evidence="21">(Microbial infection) Interacts with human cytomegalovirus protein UL138; this interaction mediates MRP1 degradation via the lysosome.</text>
</comment>
<comment type="subcellular location">
    <subcellularLocation>
        <location evidence="18 22">Cell membrane</location>
        <topology evidence="2">Multi-pass membrane protein</topology>
    </subcellularLocation>
    <subcellularLocation>
        <location evidence="28">Basolateral cell membrane</location>
        <topology evidence="2">Multi-pass membrane protein</topology>
    </subcellularLocation>
</comment>
<comment type="alternative products">
    <event type="alternative splicing"/>
    <isoform>
        <id>P33527-1</id>
        <name>1</name>
        <name>Allexons</name>
        <sequence type="displayed"/>
    </isoform>
    <isoform>
        <id>P33527-2</id>
        <name>2</name>
        <name>Delexon-17</name>
        <sequence type="described" ref="VSP_000037"/>
    </isoform>
    <isoform>
        <id>P33527-3</id>
        <name>3</name>
        <name>Delexon-18</name>
        <sequence type="described" ref="VSP_000038"/>
    </isoform>
    <isoform>
        <id>P33527-4</id>
        <name>4</name>
        <name>Delexon-30</name>
        <sequence type="described" ref="VSP_000039"/>
    </isoform>
    <isoform>
        <id>P33527-5</id>
        <name>5</name>
        <name>Delexon-17-18</name>
        <sequence type="described" ref="VSP_000037 VSP_000038"/>
    </isoform>
    <isoform>
        <id>P33527-6</id>
        <name>6</name>
        <name>Delexon-17-30</name>
        <sequence type="described" ref="VSP_000037 VSP_000039"/>
    </isoform>
    <isoform>
        <id>P33527-7</id>
        <name>7</name>
        <name>Delexon-18-30</name>
        <sequence type="described" ref="VSP_000038 VSP_000039"/>
    </isoform>
    <isoform>
        <id>P33527-8</id>
        <name>8</name>
        <name>Delexon-17-18-30</name>
        <sequence type="described" ref="VSP_000037 VSP_000038 VSP_000039"/>
    </isoform>
    <isoform>
        <id>P33527-9</id>
        <name>9</name>
        <sequence type="described" ref="VSP_017014"/>
    </isoform>
    <text>Additional isoforms seem to exist. Experimental confirmation may be lacking for some isoforms.</text>
</comment>
<comment type="tissue specificity">
    <text>Lung, testis and peripheral blood mononuclear cells.</text>
</comment>
<comment type="disease" evidence="22">
    <disease id="DI-05859">
        <name>Deafness, autosomal dominant, 77</name>
        <acronym>DFNA77</acronym>
        <description>A form of non-syndromic deafness characterized by adult onset of bilateral, postlingual, mild-to-severe sensorineural hearing loss. Sensorineural hearing loss results from damage to the neural receptors of the inner ear, the nerve pathways to the brain, or the area of the brain that receives sound information.</description>
        <dbReference type="MIM" id="618915"/>
    </disease>
    <text>The gene represented in this entry is involved in disease pathogenesis.</text>
</comment>
<comment type="similarity">
    <text evidence="31">Belongs to the ABC transporter superfamily. ABCC family. Conjugate transporter (TC 3.A.1.208) subfamily.</text>
</comment>
<comment type="online information" name="Atlas of Genetics and Cytogenetics in Oncology and Haematology">
    <link uri="https://atlasgeneticsoncology.org/gene/106/abcc1"/>
</comment>
<comment type="online information" name="ABCMdb">
    <link uri="http://abcm2.hegelab.org/search"/>
    <text>Database for mutations in ABC proteins</text>
</comment>
<protein>
    <recommendedName>
        <fullName evidence="31">Multidrug resistance-associated protein 1</fullName>
        <ecNumber evidence="25">7.6.2.2</ecNumber>
    </recommendedName>
    <alternativeName>
        <fullName>ATP-binding cassette sub-family C member 1</fullName>
    </alternativeName>
    <alternativeName>
        <fullName evidence="1">Glutathione-S-conjugate-translocating ATPase ABCC1</fullName>
        <ecNumber evidence="1">7.6.2.3</ecNumber>
    </alternativeName>
    <alternativeName>
        <fullName>Leukotriene C(4) transporter</fullName>
        <shortName>LTC4 transporter</shortName>
    </alternativeName>
</protein>